<name>MDC1_HUMAN</name>
<comment type="function">
    <text evidence="6 7 8 9 10 11 12 14 15 16 18 19 24 25 26 27 34">Histone reader protein required for checkpoint-mediated cell cycle arrest in response to DNA damage within both the S phase and G2/M phases of the cell cycle (PubMed:12475977, PubMed:12499369, PubMed:12551934, PubMed:12607003, PubMed:12607004, PubMed:12607005, PubMed:12611903, PubMed:14695167, PubMed:15201865, PubMed:15377652, PubMed:16049003, PubMed:16377563, PubMed:30898438). Specifically recognizes and binds histone H2AX phosphorylated at 'Ser-139', a marker of DNA damage, serving as a scaffold for the recruitment of DNA repair and signal transduction proteins to discrete foci of DNA damage sites (PubMed:12607005, PubMed:15201865, PubMed:16049003, PubMed:16377563, PubMed:30898438). Also required for downstream events subsequent to the recruitment of these proteins (PubMed:12607005, PubMed:15201865, PubMed:16049003, PubMed:16377563, PubMed:18582474). These include phosphorylation and activation of the ATM, CHEK1 and CHEK2 kinases, and stabilization of TP53/p53 and apoptosis (PubMed:12499369, PubMed:12551934, PubMed:12607004). ATM and CHEK2 may also be activated independently by a parallel pathway mediated by TP53BP1 (PubMed:12499369, PubMed:12551934, PubMed:12607004). Required for chromosomal stability during mitosis by promoting recruitment of TOPBP1 to DNA double strand breaks (DSBs): TOPBP1 forms filamentous assemblies that bridge MDC1 and tether broken chromosomes during mitosis (PubMed:30898438). Required for the repair of DSBs via homologous recombination by promoting recruitment of NBN component of the MRN complex to DSBs (PubMed:18411307, PubMed:18582474, PubMed:18583988, PubMed:18678890).</text>
</comment>
<comment type="subunit">
    <text evidence="8 9 10 11 12 15 16 18 19 22 23 24 25 26 27 28 29 30 31 32 33 34">Homodimer (PubMed:22234877). Interacts with H2AX, which requires phosphorylation of H2AX on 'Ser-139' (PubMed:15201865, PubMed:16049003, PubMed:16377563, PubMed:20159462). Interacts with the MRN complex, composed of MRE11, RAD50, and NBN (PubMed:12607003, PubMed:12607005). Interacts with CHEK2, which requires ATM-mediated phosphorylation of 'Thr-68' within the FHA domain of CHEK2 (PubMed:12551934, PubMed:12607004). Interacts constitutively with the BRCA1-BARD1 complex, SMC1A and TP53BP1 (PubMed:12611903, PubMed:22635276). Interacts with ATM and FANCD2, and these interactions are reduced upon DNA damage (PubMed:12607005). Also interacts with the PRKDC complex, composed of XRCC6/KU70, XRCC5/KU80 and PRKDC/XRCC7 (PubMed:15377652). This interaction may be required for PRKDC autophosphorylation, which is essential for DNA double strand break (DSB) repair (PubMed:15377652). When phosphorylated by ATM, interacts with RNF8 (via FHA domain) (PubMed:18006705). Interacts with CEP164 (PubMed:18283122). When phosphorylated, interacts with APTX (via FHA-like domain) (PubMed:20008512). Interacts (when phosphorylated) with TOPBP1; promoting TOPBP1 localization to DNA damage sites during mitosis (PubMed:21482717, PubMed:23891287, PubMed:30898438). Interacts (when phosphorylated) with NBN; promoting NBN and MRN complex localization to DNA damage sites (PubMed:18411307, PubMed:18582474, PubMed:18583988, PubMed:18678890).</text>
</comment>
<comment type="interaction">
    <interactant intactId="EBI-495644">
        <id>Q14676</id>
    </interactant>
    <interactant intactId="EBI-495465">
        <id>Q13315</id>
        <label>ATM</label>
    </interactant>
    <organismsDiffer>false</organismsDiffer>
    <experiments>3</experiments>
</comment>
<comment type="interaction">
    <interactant intactId="EBI-495644">
        <id>Q14676</id>
    </interactant>
    <interactant intactId="EBI-349905">
        <id>P38398</id>
        <label>BRCA1</label>
    </interactant>
    <organismsDiffer>false</organismsDiffer>
    <experiments>4</experiments>
</comment>
<comment type="interaction">
    <interactant intactId="EBI-495644">
        <id>Q14676</id>
    </interactant>
    <interactant intactId="EBI-494830">
        <id>P16104</id>
        <label>H2AX</label>
    </interactant>
    <organismsDiffer>false</organismsDiffer>
    <experiments>21</experiments>
</comment>
<comment type="interaction">
    <interactant intactId="EBI-495644">
        <id>Q14676</id>
    </interactant>
    <interactant intactId="EBI-494844">
        <id>O60934</id>
        <label>NBN</label>
    </interactant>
    <organismsDiffer>false</organismsDiffer>
    <experiments>33</experiments>
</comment>
<comment type="interaction">
    <interactant intactId="EBI-495644">
        <id>Q14676</id>
    </interactant>
    <interactant intactId="EBI-2693298">
        <id>O96028</id>
        <label>NSD2</label>
    </interactant>
    <organismsDiffer>false</organismsDiffer>
    <experiments>3</experiments>
</comment>
<comment type="interaction">
    <interactant intactId="EBI-495644">
        <id>Q14676</id>
    </interactant>
    <interactant intactId="EBI-15910280">
        <id>O96028-1</id>
        <label>NSD2</label>
    </interactant>
    <organismsDiffer>false</organismsDiffer>
    <experiments>3</experiments>
</comment>
<comment type="interaction">
    <interactant intactId="EBI-495644">
        <id>Q14676</id>
    </interactant>
    <interactant intactId="EBI-297202">
        <id>Q06609</id>
        <label>RAD51</label>
    </interactant>
    <organismsDiffer>false</organismsDiffer>
    <experiments>3</experiments>
</comment>
<comment type="interaction">
    <interactant intactId="EBI-495644">
        <id>Q14676</id>
    </interactant>
    <interactant intactId="EBI-373337">
        <id>O76064</id>
        <label>RNF8</label>
    </interactant>
    <organismsDiffer>false</organismsDiffer>
    <experiments>11</experiments>
</comment>
<comment type="interaction">
    <interactant intactId="EBI-495644">
        <id>Q14676</id>
    </interactant>
    <interactant intactId="EBI-15964690">
        <id>O76064-1</id>
        <label>RNF8</label>
    </interactant>
    <organismsDiffer>false</organismsDiffer>
    <experiments>2</experiments>
</comment>
<comment type="interaction">
    <interactant intactId="EBI-495644">
        <id>Q14676</id>
    </interactant>
    <interactant intactId="EBI-2125045">
        <id>O43070</id>
        <label>nbs1</label>
    </interactant>
    <organismsDiffer>true</organismsDiffer>
    <experiments>2</experiments>
</comment>
<comment type="subcellular location">
    <subcellularLocation>
        <location evidence="6 7 8 9 10 11 12 14 15 16 28">Nucleus</location>
    </subcellularLocation>
    <subcellularLocation>
        <location evidence="11 15 18 19 24 25 26 27 28 30 34 35">Chromosome</location>
    </subcellularLocation>
    <text evidence="11 15 18 19 28 34 35">Associated with chromatin (PubMed:12607005, PubMed:15201865, PubMed:16049003, PubMed:16377563). Relocalizes to discrete nuclear foci following DNA damage, this requires 'Ser-139' phosphorylation of H2AX (PubMed:12607005, PubMed:15201865, PubMed:16049003, PubMed:16377563, PubMed:30898438, PubMed:35842428). Colocalizes with APTX at sites of DNA double-strand breaks (PubMed:20008512).</text>
</comment>
<comment type="alternative products">
    <event type="alternative splicing"/>
    <isoform>
        <id>Q14676-1</id>
        <name>1</name>
        <sequence type="displayed"/>
    </isoform>
    <isoform>
        <id>Q14676-2</id>
        <name>2</name>
        <sequence type="described" ref="VSP_014593"/>
    </isoform>
    <isoform>
        <id>Q14676-3</id>
        <name>3</name>
        <sequence type="described" ref="VSP_034104"/>
    </isoform>
    <isoform>
        <id>Q14676-4</id>
        <name>4</name>
        <sequence type="described" ref="VSP_014593 VSP_034103"/>
    </isoform>
</comment>
<comment type="tissue specificity">
    <text evidence="7">Highly expressed in testis.</text>
</comment>
<comment type="domain">
    <text evidence="7">Tandemly repeated BRCT domains are characteristic of proteins involved in DNA damage signaling. In MDC1, these repeats are required for localization to chromatin which flanks sites of DNA damage marked by 'Ser-139' phosphorylation of H2AX.</text>
</comment>
<comment type="PTM">
    <text evidence="9 10 11 24 26 27 31 34">Phosphorylated upon exposure to ionizing radiation (IR), ultraviolet radiation (UV), and hydroxyurea (HU) (PubMed:12607003, PubMed:12607004, PubMed:12607005). Phosphorylation in response to IR requires ATM, NBN, and possibly CHEK2 (PubMed:12607003, PubMed:12607004, PubMed:12607005). Also phosphorylated during the G2/M phase of the cell cycle and during activation of the mitotic spindle checkpoint (PubMed:12607003, PubMed:12607004, PubMed:12607005). Phosphorylation at Thr-4 by ATM stabilizes and enhances homodimerization via the FHA domain (PubMed:22234877). Phosphorylated at Ser-168 and Ser-196 by CK2 in response to DNA damage during mitosis, promoting interaction with TOPBP1 (PubMed:30898438). Phosphorylated by CK2 in response to DNA damage, promoting interaction with NBN and recruitment of the MRN complex to DNA damage sites (PubMed:18411307, PubMed:18583988, PubMed:18678890).</text>
</comment>
<comment type="PTM">
    <text evidence="32">Sumoylation at Lys-1840 by PIAS4 following DNA damage promotes ubiquitin-mediated degradation.</text>
</comment>
<comment type="PTM">
    <text evidence="32">Ubiquitinated by RNF4, leading to proteasomal degradation; undergoes 'Lys-48'-linked polyubiquitination.</text>
</comment>
<comment type="caution">
    <text evidence="33 34">Phosphorylation at Ser-329 and Thr-331 by CK2 was initially thought to play a major role in the interaction with TOPBP1 (PubMed:23891287). However, it was later shown that phosphorylation at Ser-168 and Ser-196 promote interaction with TOPBP1 (PubMed:30898438).</text>
</comment>
<comment type="sequence caution" evidence="42">
    <conflict type="erroneous initiation">
        <sequence resource="EMBL-CDS" id="BAA11487"/>
    </conflict>
</comment>
<comment type="sequence caution" evidence="42">
    <conflict type="erroneous termination">
        <sequence resource="EMBL-CDS" id="CAH18685"/>
    </conflict>
    <text>Truncated C-terminus.</text>
</comment>
<accession>Q14676</accession>
<accession>A2AB04</accession>
<accession>A2BF04</accession>
<accession>A2RRA8</accession>
<accession>A7YY86</accession>
<accession>B0S8A2</accession>
<accession>Q0EFC2</accession>
<accession>Q2L6H7</accession>
<accession>Q2TAZ4</accession>
<accession>Q5JP55</accession>
<accession>Q5JP56</accession>
<accession>Q5ST83</accession>
<accession>Q68CQ3</accession>
<accession>Q86Z06</accession>
<accession>Q96QC2</accession>
<keyword id="KW-0002">3D-structure</keyword>
<keyword id="KW-0007">Acetylation</keyword>
<keyword id="KW-0025">Alternative splicing</keyword>
<keyword id="KW-0131">Cell cycle</keyword>
<keyword id="KW-0158">Chromosome</keyword>
<keyword id="KW-0227">DNA damage</keyword>
<keyword id="KW-0234">DNA repair</keyword>
<keyword id="KW-1017">Isopeptide bond</keyword>
<keyword id="KW-0488">Methylation</keyword>
<keyword id="KW-0539">Nucleus</keyword>
<keyword id="KW-0597">Phosphoprotein</keyword>
<keyword id="KW-1267">Proteomics identification</keyword>
<keyword id="KW-1185">Reference proteome</keyword>
<keyword id="KW-0677">Repeat</keyword>
<keyword id="KW-0832">Ubl conjugation</keyword>
<dbReference type="EMBL" id="D79992">
    <property type="protein sequence ID" value="BAA11487.2"/>
    <property type="status" value="ALT_INIT"/>
    <property type="molecule type" value="mRNA"/>
</dbReference>
<dbReference type="EMBL" id="CR749828">
    <property type="protein sequence ID" value="CAH18685.1"/>
    <property type="status" value="ALT_TERM"/>
    <property type="molecule type" value="mRNA"/>
</dbReference>
<dbReference type="EMBL" id="BA000025">
    <property type="protein sequence ID" value="BAB63322.1"/>
    <property type="molecule type" value="Genomic_DNA"/>
</dbReference>
<dbReference type="EMBL" id="AB088099">
    <property type="protein sequence ID" value="BAC54931.1"/>
    <property type="molecule type" value="Genomic_DNA"/>
</dbReference>
<dbReference type="EMBL" id="AB202097">
    <property type="protein sequence ID" value="BAE78617.1"/>
    <property type="molecule type" value="Genomic_DNA"/>
</dbReference>
<dbReference type="EMBL" id="AB103605">
    <property type="protein sequence ID" value="BAF31266.1"/>
    <property type="molecule type" value="Genomic_DNA"/>
</dbReference>
<dbReference type="EMBL" id="AL662797">
    <property type="status" value="NOT_ANNOTATED_CDS"/>
    <property type="molecule type" value="Genomic_DNA"/>
</dbReference>
<dbReference type="EMBL" id="AL662848">
    <property type="status" value="NOT_ANNOTATED_CDS"/>
    <property type="molecule type" value="Genomic_DNA"/>
</dbReference>
<dbReference type="EMBL" id="AL845353">
    <property type="status" value="NOT_ANNOTATED_CDS"/>
    <property type="molecule type" value="Genomic_DNA"/>
</dbReference>
<dbReference type="EMBL" id="BX248307">
    <property type="status" value="NOT_ANNOTATED_CDS"/>
    <property type="molecule type" value="Genomic_DNA"/>
</dbReference>
<dbReference type="EMBL" id="BX927283">
    <property type="status" value="NOT_ANNOTATED_CDS"/>
    <property type="molecule type" value="Genomic_DNA"/>
</dbReference>
<dbReference type="EMBL" id="CR759873">
    <property type="status" value="NOT_ANNOTATED_CDS"/>
    <property type="molecule type" value="Genomic_DNA"/>
</dbReference>
<dbReference type="EMBL" id="CR788240">
    <property type="status" value="NOT_ANNOTATED_CDS"/>
    <property type="molecule type" value="Genomic_DNA"/>
</dbReference>
<dbReference type="EMBL" id="CR936878">
    <property type="status" value="NOT_ANNOTATED_CDS"/>
    <property type="molecule type" value="Genomic_DNA"/>
</dbReference>
<dbReference type="EMBL" id="CH471081">
    <property type="protein sequence ID" value="EAX03321.1"/>
    <property type="molecule type" value="Genomic_DNA"/>
</dbReference>
<dbReference type="EMBL" id="BC110645">
    <property type="protein sequence ID" value="AAI10646.1"/>
    <property type="molecule type" value="mRNA"/>
</dbReference>
<dbReference type="EMBL" id="BC152556">
    <property type="protein sequence ID" value="AAI52557.1"/>
    <property type="molecule type" value="mRNA"/>
</dbReference>
<dbReference type="CCDS" id="CCDS34384.1">
    <molecule id="Q14676-1"/>
</dbReference>
<dbReference type="RefSeq" id="NP_055456.2">
    <molecule id="Q14676-1"/>
    <property type="nucleotide sequence ID" value="NM_014641.3"/>
</dbReference>
<dbReference type="RefSeq" id="XP_005249551.1">
    <molecule id="Q14676-1"/>
    <property type="nucleotide sequence ID" value="XM_005249494.6"/>
</dbReference>
<dbReference type="RefSeq" id="XP_011513303.1">
    <property type="nucleotide sequence ID" value="XM_011515001.2"/>
</dbReference>
<dbReference type="RefSeq" id="XP_011513305.1">
    <molecule id="Q14676-1"/>
    <property type="nucleotide sequence ID" value="XM_011515003.4"/>
</dbReference>
<dbReference type="RefSeq" id="XP_016867008.1">
    <property type="nucleotide sequence ID" value="XM_017011519.1"/>
</dbReference>
<dbReference type="RefSeq" id="XP_047275538.1">
    <molecule id="Q14676-1"/>
    <property type="nucleotide sequence ID" value="XM_047419582.1"/>
</dbReference>
<dbReference type="RefSeq" id="XP_047275539.1">
    <molecule id="Q14676-1"/>
    <property type="nucleotide sequence ID" value="XM_047419583.1"/>
</dbReference>
<dbReference type="RefSeq" id="XP_047275540.1">
    <molecule id="Q14676-1"/>
    <property type="nucleotide sequence ID" value="XM_047419584.1"/>
</dbReference>
<dbReference type="RefSeq" id="XP_047275544.1">
    <molecule id="Q14676-2"/>
    <property type="nucleotide sequence ID" value="XM_047419588.1"/>
</dbReference>
<dbReference type="RefSeq" id="XP_054184505.1">
    <molecule id="Q14676-1"/>
    <property type="nucleotide sequence ID" value="XM_054328530.1"/>
</dbReference>
<dbReference type="RefSeq" id="XP_054184506.1">
    <molecule id="Q14676-1"/>
    <property type="nucleotide sequence ID" value="XM_054328531.1"/>
</dbReference>
<dbReference type="RefSeq" id="XP_054184507.1">
    <molecule id="Q14676-1"/>
    <property type="nucleotide sequence ID" value="XM_054328532.1"/>
</dbReference>
<dbReference type="RefSeq" id="XP_054184508.1">
    <molecule id="Q14676-1"/>
    <property type="nucleotide sequence ID" value="XM_054328533.1"/>
</dbReference>
<dbReference type="RefSeq" id="XP_054184514.1">
    <molecule id="Q14676-2"/>
    <property type="nucleotide sequence ID" value="XM_054328539.1"/>
</dbReference>
<dbReference type="RefSeq" id="XP_054185909.1">
    <molecule id="Q14676-1"/>
    <property type="nucleotide sequence ID" value="XM_054329934.1"/>
</dbReference>
<dbReference type="RefSeq" id="XP_054185910.1">
    <molecule id="Q14676-1"/>
    <property type="nucleotide sequence ID" value="XM_054329935.1"/>
</dbReference>
<dbReference type="RefSeq" id="XP_054185911.1">
    <molecule id="Q14676-1"/>
    <property type="nucleotide sequence ID" value="XM_054329936.1"/>
</dbReference>
<dbReference type="RefSeq" id="XP_054185912.1">
    <molecule id="Q14676-1"/>
    <property type="nucleotide sequence ID" value="XM_054329937.1"/>
</dbReference>
<dbReference type="RefSeq" id="XP_054185920.1">
    <molecule id="Q14676-2"/>
    <property type="nucleotide sequence ID" value="XM_054329945.1"/>
</dbReference>
<dbReference type="RefSeq" id="XP_054186402.1">
    <molecule id="Q14676-1"/>
    <property type="nucleotide sequence ID" value="XM_054330427.1"/>
</dbReference>
<dbReference type="RefSeq" id="XP_054186403.1">
    <molecule id="Q14676-1"/>
    <property type="nucleotide sequence ID" value="XM_054330428.1"/>
</dbReference>
<dbReference type="RefSeq" id="XP_054186404.1">
    <molecule id="Q14676-1"/>
    <property type="nucleotide sequence ID" value="XM_054330429.1"/>
</dbReference>
<dbReference type="RefSeq" id="XP_054186405.1">
    <molecule id="Q14676-1"/>
    <property type="nucleotide sequence ID" value="XM_054330430.1"/>
</dbReference>
<dbReference type="RefSeq" id="XP_054186406.1">
    <molecule id="Q14676-1"/>
    <property type="nucleotide sequence ID" value="XM_054330431.1"/>
</dbReference>
<dbReference type="RefSeq" id="XP_054186413.1">
    <molecule id="Q14676-2"/>
    <property type="nucleotide sequence ID" value="XM_054330438.1"/>
</dbReference>
<dbReference type="RefSeq" id="XP_054186671.1">
    <molecule id="Q14676-1"/>
    <property type="nucleotide sequence ID" value="XM_054330696.1"/>
</dbReference>
<dbReference type="RefSeq" id="XP_054186672.1">
    <molecule id="Q14676-1"/>
    <property type="nucleotide sequence ID" value="XM_054330697.1"/>
</dbReference>
<dbReference type="RefSeq" id="XP_054186673.1">
    <molecule id="Q14676-1"/>
    <property type="nucleotide sequence ID" value="XM_054330698.1"/>
</dbReference>
<dbReference type="RefSeq" id="XP_054186674.1">
    <molecule id="Q14676-1"/>
    <property type="nucleotide sequence ID" value="XM_054330699.1"/>
</dbReference>
<dbReference type="RefSeq" id="XP_054186678.1">
    <molecule id="Q14676-2"/>
    <property type="nucleotide sequence ID" value="XM_054330703.1"/>
</dbReference>
<dbReference type="RefSeq" id="XP_054186895.1">
    <molecule id="Q14676-1"/>
    <property type="nucleotide sequence ID" value="XM_054330920.1"/>
</dbReference>
<dbReference type="RefSeq" id="XP_054186896.1">
    <molecule id="Q14676-1"/>
    <property type="nucleotide sequence ID" value="XM_054330921.1"/>
</dbReference>
<dbReference type="RefSeq" id="XP_054186897.1">
    <molecule id="Q14676-1"/>
    <property type="nucleotide sequence ID" value="XM_054330922.1"/>
</dbReference>
<dbReference type="RefSeq" id="XP_054186898.1">
    <molecule id="Q14676-1"/>
    <property type="nucleotide sequence ID" value="XM_054330923.1"/>
</dbReference>
<dbReference type="RefSeq" id="XP_054186899.1">
    <molecule id="Q14676-1"/>
    <property type="nucleotide sequence ID" value="XM_054330924.1"/>
</dbReference>
<dbReference type="RefSeq" id="XP_054186907.1">
    <molecule id="Q14676-2"/>
    <property type="nucleotide sequence ID" value="XM_054330932.1"/>
</dbReference>
<dbReference type="RefSeq" id="XP_054212843.1">
    <molecule id="Q14676-1"/>
    <property type="nucleotide sequence ID" value="XM_054356868.1"/>
</dbReference>
<dbReference type="RefSeq" id="XP_054212844.1">
    <molecule id="Q14676-1"/>
    <property type="nucleotide sequence ID" value="XM_054356869.1"/>
</dbReference>
<dbReference type="RefSeq" id="XP_054212845.1">
    <molecule id="Q14676-1"/>
    <property type="nucleotide sequence ID" value="XM_054356870.1"/>
</dbReference>
<dbReference type="RefSeq" id="XP_054212846.1">
    <molecule id="Q14676-1"/>
    <property type="nucleotide sequence ID" value="XM_054356871.1"/>
</dbReference>
<dbReference type="RefSeq" id="XP_054212854.1">
    <molecule id="Q14676-2"/>
    <property type="nucleotide sequence ID" value="XM_054356879.1"/>
</dbReference>
<dbReference type="PDB" id="2ADO">
    <property type="method" value="X-ray"/>
    <property type="resolution" value="1.45 A"/>
    <property type="chains" value="A/B=1891-2086"/>
</dbReference>
<dbReference type="PDB" id="2AZM">
    <property type="method" value="X-ray"/>
    <property type="resolution" value="2.41 A"/>
    <property type="chains" value="A/B=1883-2089"/>
</dbReference>
<dbReference type="PDB" id="2ETX">
    <property type="method" value="X-ray"/>
    <property type="resolution" value="1.33 A"/>
    <property type="chains" value="A/B=1884-2089"/>
</dbReference>
<dbReference type="PDB" id="3K05">
    <property type="method" value="X-ray"/>
    <property type="resolution" value="1.33 A"/>
    <property type="chains" value="A/B=1891-2089"/>
</dbReference>
<dbReference type="PDB" id="3UEO">
    <property type="method" value="X-ray"/>
    <property type="resolution" value="2.60 A"/>
    <property type="chains" value="E/F=325-336"/>
</dbReference>
<dbReference type="PDB" id="3UMZ">
    <property type="method" value="X-ray"/>
    <property type="resolution" value="1.65 A"/>
    <property type="chains" value="A/B=27-138"/>
</dbReference>
<dbReference type="PDB" id="3UN0">
    <property type="method" value="X-ray"/>
    <property type="resolution" value="2.30 A"/>
    <property type="chains" value="A/B=26-138"/>
</dbReference>
<dbReference type="PDB" id="3UNM">
    <property type="method" value="X-ray"/>
    <property type="resolution" value="1.80 A"/>
    <property type="chains" value="A/B=27-138"/>
</dbReference>
<dbReference type="PDB" id="3UNN">
    <property type="method" value="X-ray"/>
    <property type="resolution" value="1.70 A"/>
    <property type="chains" value="A=27-138, B=1-8"/>
</dbReference>
<dbReference type="PDB" id="3UOT">
    <property type="method" value="X-ray"/>
    <property type="resolution" value="1.80 A"/>
    <property type="chains" value="A/B=19-138, D/E=1-10"/>
</dbReference>
<dbReference type="PDB" id="9IF9">
    <property type="method" value="X-ray"/>
    <property type="resolution" value="2.55 A"/>
    <property type="chains" value="C/D=761-769"/>
</dbReference>
<dbReference type="PDBsum" id="2ADO"/>
<dbReference type="PDBsum" id="2AZM"/>
<dbReference type="PDBsum" id="2ETX"/>
<dbReference type="PDBsum" id="3K05"/>
<dbReference type="PDBsum" id="3UEO"/>
<dbReference type="PDBsum" id="3UMZ"/>
<dbReference type="PDBsum" id="3UN0"/>
<dbReference type="PDBsum" id="3UNM"/>
<dbReference type="PDBsum" id="3UNN"/>
<dbReference type="PDBsum" id="3UOT"/>
<dbReference type="PDBsum" id="9IF9"/>
<dbReference type="SMR" id="Q14676"/>
<dbReference type="BioGRID" id="115014">
    <property type="interactions" value="459"/>
</dbReference>
<dbReference type="CORUM" id="Q14676"/>
<dbReference type="DIP" id="DIP-33603N"/>
<dbReference type="FunCoup" id="Q14676">
    <property type="interactions" value="2240"/>
</dbReference>
<dbReference type="IntAct" id="Q14676">
    <property type="interactions" value="219"/>
</dbReference>
<dbReference type="MINT" id="Q14676"/>
<dbReference type="STRING" id="9606.ENSP00000365588"/>
<dbReference type="BindingDB" id="Q14676"/>
<dbReference type="GlyCosmos" id="Q14676">
    <property type="glycosylation" value="1 site, 1 glycan"/>
</dbReference>
<dbReference type="GlyGen" id="Q14676">
    <property type="glycosylation" value="21 sites, 1 N-linked glycan (1 site), 1 O-linked glycan (13 sites)"/>
</dbReference>
<dbReference type="iPTMnet" id="Q14676"/>
<dbReference type="PhosphoSitePlus" id="Q14676"/>
<dbReference type="SwissPalm" id="Q14676"/>
<dbReference type="BioMuta" id="MDC1"/>
<dbReference type="CPTAC" id="CPTAC-3234"/>
<dbReference type="CPTAC" id="CPTAC-3235"/>
<dbReference type="CPTAC" id="CPTAC-931"/>
<dbReference type="jPOST" id="Q14676"/>
<dbReference type="MassIVE" id="Q14676"/>
<dbReference type="PaxDb" id="9606-ENSP00000365588"/>
<dbReference type="PeptideAtlas" id="Q14676"/>
<dbReference type="ProteomicsDB" id="60105">
    <molecule id="Q14676-1"/>
</dbReference>
<dbReference type="ProteomicsDB" id="60106">
    <molecule id="Q14676-2"/>
</dbReference>
<dbReference type="ProteomicsDB" id="60107">
    <molecule id="Q14676-3"/>
</dbReference>
<dbReference type="ProteomicsDB" id="60108">
    <molecule id="Q14676-4"/>
</dbReference>
<dbReference type="Pumba" id="Q14676"/>
<dbReference type="Antibodypedia" id="1870">
    <property type="antibodies" value="464 antibodies from 33 providers"/>
</dbReference>
<dbReference type="CPTC" id="Q14676">
    <property type="antibodies" value="5 antibodies"/>
</dbReference>
<dbReference type="DNASU" id="9656"/>
<dbReference type="Ensembl" id="ENST00000376406.8">
    <molecule id="Q14676-1"/>
    <property type="protein sequence ID" value="ENSP00000365588.3"/>
    <property type="gene ID" value="ENSG00000137337.16"/>
</dbReference>
<dbReference type="Ensembl" id="ENST00000383566.8">
    <property type="protein sequence ID" value="ENSP00000373060.4"/>
    <property type="gene ID" value="ENSG00000206481.11"/>
</dbReference>
<dbReference type="Ensembl" id="ENST00000420019.6">
    <molecule id="Q14676-1"/>
    <property type="protein sequence ID" value="ENSP00000396484.2"/>
    <property type="gene ID" value="ENSG00000224587.9"/>
</dbReference>
<dbReference type="Ensembl" id="ENST00000420320.6">
    <molecule id="Q14676-1"/>
    <property type="protein sequence ID" value="ENSP00000416511.2"/>
    <property type="gene ID" value="ENSG00000225589.9"/>
</dbReference>
<dbReference type="Ensembl" id="ENST00000427406.6">
    <molecule id="Q14676-1"/>
    <property type="protein sequence ID" value="ENSP00000387429.2"/>
    <property type="gene ID" value="ENSG00000234012.9"/>
</dbReference>
<dbReference type="Ensembl" id="ENST00000435664.6">
    <property type="protein sequence ID" value="ENSP00000404318.2"/>
    <property type="gene ID" value="ENSG00000231135.9"/>
</dbReference>
<dbReference type="Ensembl" id="ENST00000440369.6">
    <molecule id="Q14676-1"/>
    <property type="protein sequence ID" value="ENSP00000415212.2"/>
    <property type="gene ID" value="ENSG00000228575.9"/>
</dbReference>
<dbReference type="Ensembl" id="ENST00000449153.6">
    <molecule id="Q14676-1"/>
    <property type="protein sequence ID" value="ENSP00000409167.2"/>
    <property type="gene ID" value="ENSG00000237095.9"/>
</dbReference>
<dbReference type="GeneID" id="9656"/>
<dbReference type="KEGG" id="hsa:9656"/>
<dbReference type="MANE-Select" id="ENST00000376406.8">
    <property type="protein sequence ID" value="ENSP00000365588.3"/>
    <property type="RefSeq nucleotide sequence ID" value="NM_014641.3"/>
    <property type="RefSeq protein sequence ID" value="NP_055456.2"/>
</dbReference>
<dbReference type="UCSC" id="uc003nrg.5">
    <molecule id="Q14676-1"/>
    <property type="organism name" value="human"/>
</dbReference>
<dbReference type="AGR" id="HGNC:21163"/>
<dbReference type="CTD" id="9656"/>
<dbReference type="DisGeNET" id="9656"/>
<dbReference type="GeneCards" id="MDC1"/>
<dbReference type="HGNC" id="HGNC:21163">
    <property type="gene designation" value="MDC1"/>
</dbReference>
<dbReference type="HPA" id="ENSG00000137337">
    <property type="expression patterns" value="Low tissue specificity"/>
</dbReference>
<dbReference type="MalaCards" id="MDC1"/>
<dbReference type="MIM" id="607593">
    <property type="type" value="gene"/>
</dbReference>
<dbReference type="neXtProt" id="NX_Q14676"/>
<dbReference type="OpenTargets" id="ENSG00000137337"/>
<dbReference type="PharmGKB" id="PA134942837"/>
<dbReference type="VEuPathDB" id="HostDB:ENSG00000137337"/>
<dbReference type="eggNOG" id="KOG2043">
    <property type="taxonomic scope" value="Eukaryota"/>
</dbReference>
<dbReference type="GeneTree" id="ENSGT00940000161757"/>
<dbReference type="HOGENOM" id="CLU_003038_0_0_1"/>
<dbReference type="InParanoid" id="Q14676"/>
<dbReference type="OMA" id="PRTRQNE"/>
<dbReference type="OrthoDB" id="342264at2759"/>
<dbReference type="PAN-GO" id="Q14676">
    <property type="GO annotations" value="1 GO annotation based on evolutionary models"/>
</dbReference>
<dbReference type="PhylomeDB" id="Q14676"/>
<dbReference type="TreeFam" id="TF329580"/>
<dbReference type="PathwayCommons" id="Q14676"/>
<dbReference type="Reactome" id="R-HSA-3108214">
    <property type="pathway name" value="SUMOylation of DNA damage response and repair proteins"/>
</dbReference>
<dbReference type="Reactome" id="R-HSA-5693565">
    <property type="pathway name" value="Recruitment and ATM-mediated phosphorylation of repair and signaling proteins at DNA double strand breaks"/>
</dbReference>
<dbReference type="Reactome" id="R-HSA-5693571">
    <property type="pathway name" value="Nonhomologous End-Joining (NHEJ)"/>
</dbReference>
<dbReference type="Reactome" id="R-HSA-5693607">
    <property type="pathway name" value="Processing of DNA double-strand break ends"/>
</dbReference>
<dbReference type="Reactome" id="R-HSA-6796648">
    <property type="pathway name" value="TP53 Regulates Transcription of DNA Repair Genes"/>
</dbReference>
<dbReference type="Reactome" id="R-HSA-69473">
    <property type="pathway name" value="G2/M DNA damage checkpoint"/>
</dbReference>
<dbReference type="SignaLink" id="Q14676"/>
<dbReference type="SIGNOR" id="Q14676"/>
<dbReference type="BioGRID-ORCS" id="9656">
    <property type="hits" value="141 hits in 1162 CRISPR screens"/>
</dbReference>
<dbReference type="CD-CODE" id="A0DCDA94">
    <property type="entry name" value="DNA damage foci"/>
</dbReference>
<dbReference type="ChiTaRS" id="MDC1">
    <property type="organism name" value="human"/>
</dbReference>
<dbReference type="EvolutionaryTrace" id="Q14676"/>
<dbReference type="GeneWiki" id="MDC1"/>
<dbReference type="GenomeRNAi" id="9656"/>
<dbReference type="Pharos" id="Q14676">
    <property type="development level" value="Tbio"/>
</dbReference>
<dbReference type="PRO" id="PR:Q14676"/>
<dbReference type="Proteomes" id="UP000005640">
    <property type="component" value="Chromosome 6"/>
</dbReference>
<dbReference type="RNAct" id="Q14676">
    <property type="molecule type" value="protein"/>
</dbReference>
<dbReference type="Bgee" id="ENSG00000137337">
    <property type="expression patterns" value="Expressed in right testis and 95 other cell types or tissues"/>
</dbReference>
<dbReference type="ExpressionAtlas" id="Q14676">
    <property type="expression patterns" value="baseline and differential"/>
</dbReference>
<dbReference type="GO" id="GO:0005694">
    <property type="term" value="C:chromosome"/>
    <property type="evidence" value="ECO:0000250"/>
    <property type="project" value="UniProtKB"/>
</dbReference>
<dbReference type="GO" id="GO:0005925">
    <property type="term" value="C:focal adhesion"/>
    <property type="evidence" value="ECO:0000314"/>
    <property type="project" value="HPA"/>
</dbReference>
<dbReference type="GO" id="GO:0016604">
    <property type="term" value="C:nuclear body"/>
    <property type="evidence" value="ECO:0000314"/>
    <property type="project" value="HPA"/>
</dbReference>
<dbReference type="GO" id="GO:0005654">
    <property type="term" value="C:nucleoplasm"/>
    <property type="evidence" value="ECO:0000314"/>
    <property type="project" value="HPA"/>
</dbReference>
<dbReference type="GO" id="GO:0005634">
    <property type="term" value="C:nucleus"/>
    <property type="evidence" value="ECO:0000314"/>
    <property type="project" value="MGI"/>
</dbReference>
<dbReference type="GO" id="GO:0035861">
    <property type="term" value="C:site of double-strand break"/>
    <property type="evidence" value="ECO:0000314"/>
    <property type="project" value="UniProtKB"/>
</dbReference>
<dbReference type="GO" id="GO:0140463">
    <property type="term" value="F:chromatin-protein adaptor activity"/>
    <property type="evidence" value="ECO:0000314"/>
    <property type="project" value="UniProtKB"/>
</dbReference>
<dbReference type="GO" id="GO:0140566">
    <property type="term" value="F:histone reader activity"/>
    <property type="evidence" value="ECO:0000314"/>
    <property type="project" value="UniProtKB"/>
</dbReference>
<dbReference type="GO" id="GO:0006974">
    <property type="term" value="P:DNA damage response"/>
    <property type="evidence" value="ECO:0000314"/>
    <property type="project" value="UniProt"/>
</dbReference>
<dbReference type="GO" id="GO:0006281">
    <property type="term" value="P:DNA repair"/>
    <property type="evidence" value="ECO:0007669"/>
    <property type="project" value="UniProtKB-KW"/>
</dbReference>
<dbReference type="GO" id="GO:0000076">
    <property type="term" value="P:DNA replication checkpoint signaling"/>
    <property type="evidence" value="ECO:0000314"/>
    <property type="project" value="UniProtKB"/>
</dbReference>
<dbReference type="GO" id="GO:0031573">
    <property type="term" value="P:mitotic intra-S DNA damage checkpoint signaling"/>
    <property type="evidence" value="ECO:0000304"/>
    <property type="project" value="UniProtKB"/>
</dbReference>
<dbReference type="GO" id="GO:1990166">
    <property type="term" value="P:protein localization to site of double-strand break"/>
    <property type="evidence" value="ECO:0000314"/>
    <property type="project" value="UniProtKB"/>
</dbReference>
<dbReference type="CDD" id="cd17744">
    <property type="entry name" value="BRCT_MDC1_rpt1"/>
    <property type="match status" value="1"/>
</dbReference>
<dbReference type="CDD" id="cd18441">
    <property type="entry name" value="BRCT_MDC1_rpt2"/>
    <property type="match status" value="1"/>
</dbReference>
<dbReference type="CDD" id="cd22665">
    <property type="entry name" value="FHA_MDC1"/>
    <property type="match status" value="1"/>
</dbReference>
<dbReference type="FunFam" id="2.60.200.20:FF:000029">
    <property type="entry name" value="Mediator of DNA damage checkpoint protein 1"/>
    <property type="match status" value="1"/>
</dbReference>
<dbReference type="FunFam" id="3.40.50.10190:FF:000037">
    <property type="entry name" value="Mediator of DNA damage checkpoint protein 1"/>
    <property type="match status" value="1"/>
</dbReference>
<dbReference type="FunFam" id="3.40.50.10190:FF:000040">
    <property type="entry name" value="Mediator of DNA damage checkpoint protein 1"/>
    <property type="match status" value="1"/>
</dbReference>
<dbReference type="Gene3D" id="2.60.200.20">
    <property type="match status" value="1"/>
</dbReference>
<dbReference type="Gene3D" id="3.40.50.10190">
    <property type="entry name" value="BRCT domain"/>
    <property type="match status" value="2"/>
</dbReference>
<dbReference type="IDEAL" id="IID00568"/>
<dbReference type="InterPro" id="IPR001357">
    <property type="entry name" value="BRCT_dom"/>
</dbReference>
<dbReference type="InterPro" id="IPR036420">
    <property type="entry name" value="BRCT_dom_sf"/>
</dbReference>
<dbReference type="InterPro" id="IPR051579">
    <property type="entry name" value="DDR_Transcriptional_Reg"/>
</dbReference>
<dbReference type="InterPro" id="IPR000253">
    <property type="entry name" value="FHA_dom"/>
</dbReference>
<dbReference type="InterPro" id="IPR008984">
    <property type="entry name" value="SMAD_FHA_dom_sf"/>
</dbReference>
<dbReference type="PANTHER" id="PTHR23196:SF34">
    <property type="entry name" value="MEDIATOR OF DNA DAMAGE CHECKPOINT PROTEIN 1"/>
    <property type="match status" value="1"/>
</dbReference>
<dbReference type="PANTHER" id="PTHR23196">
    <property type="entry name" value="PAX TRANSCRIPTION ACTIVATION DOMAIN INTERACTING PROTEIN"/>
    <property type="match status" value="1"/>
</dbReference>
<dbReference type="Pfam" id="PF16589">
    <property type="entry name" value="BRCT_2"/>
    <property type="match status" value="1"/>
</dbReference>
<dbReference type="Pfam" id="PF00498">
    <property type="entry name" value="FHA"/>
    <property type="match status" value="1"/>
</dbReference>
<dbReference type="Pfam" id="PF16770">
    <property type="entry name" value="RTT107_BRCT_5"/>
    <property type="match status" value="1"/>
</dbReference>
<dbReference type="SMART" id="SM00240">
    <property type="entry name" value="FHA"/>
    <property type="match status" value="1"/>
</dbReference>
<dbReference type="SUPFAM" id="SSF52113">
    <property type="entry name" value="BRCT domain"/>
    <property type="match status" value="1"/>
</dbReference>
<dbReference type="SUPFAM" id="SSF49879">
    <property type="entry name" value="SMAD/FHA domain"/>
    <property type="match status" value="1"/>
</dbReference>
<dbReference type="PROSITE" id="PS50172">
    <property type="entry name" value="BRCT"/>
    <property type="match status" value="1"/>
</dbReference>
<dbReference type="PROSITE" id="PS50006">
    <property type="entry name" value="FHA_DOMAIN"/>
    <property type="match status" value="1"/>
</dbReference>
<feature type="chain" id="PRO_0000096316" description="Mediator of DNA damage checkpoint protein 1">
    <location>
        <begin position="1"/>
        <end position="2089"/>
    </location>
</feature>
<feature type="domain" description="FHA" evidence="4">
    <location>
        <begin position="54"/>
        <end position="105"/>
    </location>
</feature>
<feature type="domain" description="BRCT 1" evidence="3">
    <location>
        <begin position="1892"/>
        <end position="1970"/>
    </location>
</feature>
<feature type="domain" description="BRCT 2" evidence="3">
    <location>
        <begin position="1991"/>
        <end position="2082"/>
    </location>
</feature>
<feature type="region of interest" description="Interaction with CHEK2">
    <location>
        <begin position="1"/>
        <end position="150"/>
    </location>
</feature>
<feature type="region of interest" description="Disordered" evidence="5">
    <location>
        <begin position="1"/>
        <end position="22"/>
    </location>
</feature>
<feature type="region of interest" description="Interaction with the MRN complex">
    <location>
        <begin position="2"/>
        <end position="220"/>
    </location>
</feature>
<feature type="region of interest" description="Required for nuclear localization (NLS1)">
    <location>
        <begin position="145"/>
        <end position="568"/>
    </location>
</feature>
<feature type="region of interest" description="Disordered" evidence="5">
    <location>
        <begin position="185"/>
        <end position="248"/>
    </location>
</feature>
<feature type="region of interest" description="Disordered" evidence="5">
    <location>
        <begin position="261"/>
        <end position="280"/>
    </location>
</feature>
<feature type="region of interest" description="Disordered" evidence="5">
    <location>
        <begin position="286"/>
        <end position="317"/>
    </location>
</feature>
<feature type="region of interest" description="Disordered" evidence="5">
    <location>
        <begin position="482"/>
        <end position="515"/>
    </location>
</feature>
<feature type="region of interest" description="Disordered" evidence="5">
    <location>
        <begin position="653"/>
        <end position="689"/>
    </location>
</feature>
<feature type="region of interest" description="Disordered" evidence="5">
    <location>
        <begin position="780"/>
        <end position="1887"/>
    </location>
</feature>
<feature type="region of interest" description="Interaction with the PRKDC complex">
    <location>
        <begin position="1148"/>
        <end position="1610"/>
    </location>
</feature>
<feature type="region of interest" description="Required for nuclear localization (NLS2)">
    <location>
        <begin position="1698"/>
        <end position="2089"/>
    </location>
</feature>
<feature type="compositionally biased region" description="Acidic residues" evidence="5">
    <location>
        <begin position="1"/>
        <end position="19"/>
    </location>
</feature>
<feature type="compositionally biased region" description="Basic and acidic residues" evidence="5">
    <location>
        <begin position="261"/>
        <end position="274"/>
    </location>
</feature>
<feature type="compositionally biased region" description="Basic and acidic residues" evidence="5">
    <location>
        <begin position="306"/>
        <end position="317"/>
    </location>
</feature>
<feature type="compositionally biased region" description="Basic and acidic residues" evidence="5">
    <location>
        <begin position="671"/>
        <end position="685"/>
    </location>
</feature>
<feature type="compositionally biased region" description="Basic and acidic residues" evidence="5">
    <location>
        <begin position="819"/>
        <end position="844"/>
    </location>
</feature>
<feature type="compositionally biased region" description="Basic and acidic residues" evidence="5">
    <location>
        <begin position="851"/>
        <end position="862"/>
    </location>
</feature>
<feature type="compositionally biased region" description="Basic and acidic residues" evidence="5">
    <location>
        <begin position="868"/>
        <end position="905"/>
    </location>
</feature>
<feature type="compositionally biased region" description="Basic and acidic residues" evidence="5">
    <location>
        <begin position="914"/>
        <end position="951"/>
    </location>
</feature>
<feature type="compositionally biased region" description="Polar residues" evidence="5">
    <location>
        <begin position="955"/>
        <end position="965"/>
    </location>
</feature>
<feature type="compositionally biased region" description="Basic and acidic residues" evidence="5">
    <location>
        <begin position="1016"/>
        <end position="1031"/>
    </location>
</feature>
<feature type="compositionally biased region" description="Pro residues" evidence="5">
    <location>
        <begin position="1040"/>
        <end position="1051"/>
    </location>
</feature>
<feature type="compositionally biased region" description="Basic residues" evidence="5">
    <location>
        <begin position="1103"/>
        <end position="1113"/>
    </location>
</feature>
<feature type="compositionally biased region" description="Polar residues" evidence="5">
    <location>
        <begin position="1129"/>
        <end position="1156"/>
    </location>
</feature>
<feature type="compositionally biased region" description="Polar residues" evidence="5">
    <location>
        <begin position="1169"/>
        <end position="1187"/>
    </location>
</feature>
<feature type="compositionally biased region" description="Polar residues" evidence="5">
    <location>
        <begin position="1210"/>
        <end position="1228"/>
    </location>
</feature>
<feature type="compositionally biased region" description="Polar residues" evidence="5">
    <location>
        <begin position="1251"/>
        <end position="1268"/>
    </location>
</feature>
<feature type="compositionally biased region" description="Low complexity" evidence="5">
    <location>
        <begin position="1304"/>
        <end position="1318"/>
    </location>
</feature>
<feature type="compositionally biased region" description="Low complexity" evidence="5">
    <location>
        <begin position="1347"/>
        <end position="1359"/>
    </location>
</feature>
<feature type="compositionally biased region" description="Polar residues" evidence="5">
    <location>
        <begin position="1375"/>
        <end position="1391"/>
    </location>
</feature>
<feature type="compositionally biased region" description="Polar residues" evidence="5">
    <location>
        <begin position="1416"/>
        <end position="1444"/>
    </location>
</feature>
<feature type="compositionally biased region" description="Polar residues" evidence="5">
    <location>
        <begin position="1456"/>
        <end position="1475"/>
    </location>
</feature>
<feature type="compositionally biased region" description="Polar residues" evidence="5">
    <location>
        <begin position="1498"/>
        <end position="1514"/>
    </location>
</feature>
<feature type="compositionally biased region" description="Polar residues" evidence="5">
    <location>
        <begin position="1538"/>
        <end position="1555"/>
    </location>
</feature>
<feature type="compositionally biased region" description="Polar residues" evidence="5">
    <location>
        <begin position="1579"/>
        <end position="1596"/>
    </location>
</feature>
<feature type="compositionally biased region" description="Pro residues" evidence="5">
    <location>
        <begin position="1611"/>
        <end position="1620"/>
    </location>
</feature>
<feature type="compositionally biased region" description="Polar residues" evidence="5">
    <location>
        <begin position="1624"/>
        <end position="1636"/>
    </location>
</feature>
<feature type="compositionally biased region" description="Polar residues" evidence="5">
    <location>
        <begin position="1678"/>
        <end position="1689"/>
    </location>
</feature>
<feature type="compositionally biased region" description="Polar residues" evidence="5">
    <location>
        <begin position="1698"/>
        <end position="1719"/>
    </location>
</feature>
<feature type="compositionally biased region" description="Polar residues" evidence="5">
    <location>
        <begin position="1823"/>
        <end position="1836"/>
    </location>
</feature>
<feature type="compositionally biased region" description="Basic and acidic residues" evidence="5">
    <location>
        <begin position="1847"/>
        <end position="1857"/>
    </location>
</feature>
<feature type="modified residue" description="Phosphothreonine; by ATM" evidence="31">
    <location>
        <position position="4"/>
    </location>
</feature>
<feature type="modified residue" description="Phosphoserine" evidence="52 54 56">
    <location>
        <position position="108"/>
    </location>
</feature>
<feature type="modified residue" description="Phosphothreonine" evidence="54">
    <location>
        <position position="146"/>
    </location>
</feature>
<feature type="modified residue" description="Phosphoserine; by CK2" evidence="34 35 45 47 51 52 54 56">
    <location>
        <position position="168"/>
    </location>
</feature>
<feature type="modified residue" description="Phosphoserine" evidence="2">
    <location>
        <position position="176"/>
    </location>
</feature>
<feature type="modified residue" description="Phosphoserine; by CK2" evidence="33 35">
    <location>
        <position position="196"/>
    </location>
</feature>
<feature type="modified residue" description="Phosphoserine; by CK2" evidence="27">
    <location>
        <position position="218"/>
    </location>
</feature>
<feature type="modified residue" description="Phosphothreonine; by CK2" evidence="27">
    <location>
        <position position="220"/>
    </location>
</feature>
<feature type="modified residue" description="Phosphoserine; by CK2" evidence="24 27 49 53 54">
    <location>
        <position position="299"/>
    </location>
</feature>
<feature type="modified residue" description="Phosphothreonine; by CK2" evidence="24 27 49 53">
    <location>
        <position position="301"/>
    </location>
</feature>
<feature type="modified residue" description="Phosphoserine; by CK2" evidence="24 26 27 33 51 52 53 56">
    <location>
        <position position="329"/>
    </location>
</feature>
<feature type="modified residue" description="Phosphothreonine; by CK2" evidence="24 26 27 33 51 52">
    <location>
        <position position="331"/>
    </location>
</feature>
<feature type="modified residue" description="Phosphoserine" evidence="46 51">
    <location>
        <position position="372"/>
    </location>
</feature>
<feature type="modified residue" description="Phosphoserine; by CK2" evidence="27 46 51 54">
    <location>
        <position position="376"/>
    </location>
</feature>
<feature type="modified residue" description="Phosphothreonine; by CK2" evidence="27 46 51">
    <location>
        <position position="378"/>
    </location>
</feature>
<feature type="modified residue" description="Phosphoserine" evidence="49">
    <location>
        <position position="394"/>
    </location>
</feature>
<feature type="modified residue" description="Phosphoserine" evidence="49">
    <location>
        <position position="397"/>
    </location>
</feature>
<feature type="modified residue" description="Phosphoserine; by CK2" evidence="24 27 49 51 52 53">
    <location>
        <position position="402"/>
    </location>
</feature>
<feature type="modified residue" description="Phosphothreonine; by CK2" evidence="24 27 49 51 52 53">
    <location>
        <position position="404"/>
    </location>
</feature>
<feature type="modified residue" description="Phosphoserine" evidence="51">
    <location>
        <position position="411"/>
    </location>
</feature>
<feature type="modified residue" description="Phosphothreonine" evidence="49 51">
    <location>
        <position position="449"/>
    </location>
</feature>
<feature type="modified residue" description="Phosphoserine; by CK2" evidence="24 27 49 51 54">
    <location>
        <position position="453"/>
    </location>
</feature>
<feature type="modified residue" description="Phosphothreonine; by CK2" evidence="24 27 49 51 53 54">
    <location>
        <position position="455"/>
    </location>
</feature>
<feature type="modified residue" description="Phosphoserine" evidence="52 54 56">
    <location>
        <position position="485"/>
    </location>
</feature>
<feature type="modified residue" description="Phosphoserine" evidence="49 53 54">
    <location>
        <position position="495"/>
    </location>
</feature>
<feature type="modified residue" description="Phosphoserine" evidence="49 53 54">
    <location>
        <position position="498"/>
    </location>
</feature>
<feature type="modified residue" description="Phosphoserine" evidence="1">
    <location>
        <position position="504"/>
    </location>
</feature>
<feature type="modified residue" description="Phosphoserine" evidence="1">
    <location>
        <position position="505"/>
    </location>
</feature>
<feature type="modified residue" description="Phosphoserine" evidence="46 49 52 54">
    <location>
        <position position="513"/>
    </location>
</feature>
<feature type="modified residue" description="Phosphothreonine" evidence="46 54">
    <location>
        <position position="523"/>
    </location>
</feature>
<feature type="modified residue" description="Phosphoserine" evidence="2">
    <location>
        <position position="590"/>
    </location>
</feature>
<feature type="modified residue" description="Phosphoserine" evidence="46 49 54 56">
    <location>
        <position position="780"/>
    </location>
</feature>
<feature type="modified residue" description="Phosphoserine" evidence="49">
    <location>
        <position position="793"/>
    </location>
</feature>
<feature type="modified residue" description="N6-acetyllysine" evidence="50">
    <location>
        <position position="812"/>
    </location>
</feature>
<feature type="modified residue" description="Phosphoserine" evidence="52">
    <location>
        <position position="955"/>
    </location>
</feature>
<feature type="modified residue" description="Phosphoserine" evidence="54">
    <location>
        <position position="998"/>
    </location>
</feature>
<feature type="modified residue" description="Phosphoserine" evidence="49">
    <location>
        <position position="1033"/>
    </location>
</feature>
<feature type="modified residue" description="Phosphoserine" evidence="49 52">
    <location>
        <position position="1068"/>
    </location>
</feature>
<feature type="modified residue" description="Phosphoserine" evidence="54">
    <location>
        <position position="1086"/>
    </location>
</feature>
<feature type="modified residue" description="Phosphothreonine" evidence="51 54 56">
    <location>
        <position position="1157"/>
    </location>
</feature>
<feature type="modified residue" description="Phosphothreonine" evidence="49 56">
    <location>
        <position position="1198"/>
    </location>
</feature>
<feature type="modified residue" description="Phosphoserine" evidence="1">
    <location>
        <position position="1235"/>
    </location>
</feature>
<feature type="modified residue" description="Phosphothreonine" evidence="56">
    <location>
        <position position="1239"/>
    </location>
</feature>
<feature type="modified residue" description="Phosphothreonine" evidence="56">
    <location>
        <position position="1280"/>
    </location>
</feature>
<feature type="modified residue" description="Phosphothreonine" evidence="56">
    <location>
        <position position="1302"/>
    </location>
</feature>
<feature type="modified residue" description="Phosphoserine" evidence="49 52 54">
    <location>
        <position position="1399"/>
    </location>
</feature>
<feature type="modified residue" description="Phosphoserine" evidence="49 54">
    <location>
        <position position="1400"/>
    </location>
</feature>
<feature type="modified residue" description="N6-acetyllysine" evidence="50">
    <location>
        <position position="1402"/>
    </location>
</feature>
<feature type="modified residue" description="Phosphothreonine" evidence="48 49 52 54">
    <location>
        <position position="1403"/>
    </location>
</feature>
<feature type="modified residue" description="Phosphothreonine" evidence="48 49 52 54">
    <location>
        <position position="1425"/>
    </location>
</feature>
<feature type="modified residue" description="Phosphothreonine" evidence="49 51">
    <location>
        <position position="1466"/>
    </location>
</feature>
<feature type="modified residue" description="Phosphothreonine" evidence="49">
    <location>
        <position position="1548"/>
    </location>
</feature>
<feature type="modified residue" description="Phosphoserine" evidence="54">
    <location>
        <position position="1564"/>
    </location>
</feature>
<feature type="modified residue" description="Phosphothreonine" evidence="53">
    <location>
        <position position="1567"/>
    </location>
</feature>
<feature type="modified residue" description="Phosphothreonine" evidence="49 52 54">
    <location>
        <position position="1589"/>
    </location>
</feature>
<feature type="modified residue" description="Phosphoserine" evidence="49">
    <location>
        <position position="1604"/>
    </location>
</feature>
<feature type="modified residue" description="Phosphothreonine" evidence="56">
    <location>
        <position position="1608"/>
    </location>
</feature>
<feature type="modified residue" description="Phosphothreonine" evidence="49">
    <location>
        <position position="1630"/>
    </location>
</feature>
<feature type="modified residue" description="Phosphothreonine" evidence="49">
    <location>
        <position position="1664"/>
    </location>
</feature>
<feature type="modified residue" description="Phosphothreonine" evidence="49 54">
    <location>
        <position position="1671"/>
    </location>
</feature>
<feature type="modified residue" description="Phosphoserine" evidence="49">
    <location>
        <position position="1681"/>
    </location>
</feature>
<feature type="modified residue" description="Phosphothreonine" evidence="49">
    <location>
        <position position="1697"/>
    </location>
</feature>
<feature type="modified residue" description="Phosphoserine" evidence="49">
    <location>
        <position position="1702"/>
    </location>
</feature>
<feature type="modified residue" description="Phosphoserine" evidence="49">
    <location>
        <position position="1711"/>
    </location>
</feature>
<feature type="modified residue" description="Phosphoserine" evidence="49 52 54">
    <location>
        <position position="1775"/>
    </location>
</feature>
<feature type="modified residue" description="Phosphothreonine" evidence="52">
    <location>
        <position position="1800"/>
    </location>
</feature>
<feature type="modified residue" description="Phosphoserine" evidence="52 53 54">
    <location>
        <position position="1820"/>
    </location>
</feature>
<feature type="modified residue" description="Phosphothreonine" evidence="49">
    <location>
        <position position="1858"/>
    </location>
</feature>
<feature type="modified residue" description="Omega-N-methylarginine" evidence="55">
    <location>
        <position position="1943"/>
    </location>
</feature>
<feature type="cross-link" description="Glycyl lysine isopeptide (Lys-Gly) (interchain with G-Cter in SUMO1); alternate" evidence="57">
    <location>
        <position position="616"/>
    </location>
</feature>
<feature type="cross-link" description="Glycyl lysine isopeptide (Lys-Gly) (interchain with G-Cter in SUMO2); alternate" evidence="59">
    <location>
        <position position="616"/>
    </location>
</feature>
<feature type="cross-link" description="Glycyl lysine isopeptide (Lys-Gly) (interchain with G-Cter in SUMO1); alternate" evidence="57">
    <location>
        <position position="1413"/>
    </location>
</feature>
<feature type="cross-link" description="Glycyl lysine isopeptide (Lys-Gly) (interchain with G-Cter in SUMO2); alternate" evidence="59">
    <location>
        <position position="1413"/>
    </location>
</feature>
<feature type="cross-link" description="Glycyl lysine isopeptide (Lys-Gly) (interchain with G-Cter in SUMO2)" evidence="59">
    <location>
        <position position="1740"/>
    </location>
</feature>
<feature type="cross-link" description="Glycyl lysine isopeptide (Lys-Gly) (interchain with G-Cter in SUMO2)" evidence="59">
    <location>
        <position position="1790"/>
    </location>
</feature>
<feature type="cross-link" description="Glycyl lysine isopeptide (Lys-Gly) (interchain with G-Cter in SUMO1); alternate" evidence="32">
    <location>
        <position position="1840"/>
    </location>
</feature>
<feature type="cross-link" description="Glycyl lysine isopeptide (Lys-Gly) (interchain with G-Cter in SUMO2); alternate" evidence="58 59">
    <location>
        <position position="1840"/>
    </location>
</feature>
<feature type="splice variant" id="VSP_014593" description="In isoform 2 and isoform 4." evidence="40">
    <location>
        <begin position="741"/>
        <end position="1004"/>
    </location>
</feature>
<feature type="splice variant" id="VSP_034103" description="In isoform 4." evidence="40">
    <location>
        <begin position="1029"/>
        <end position="1787"/>
    </location>
</feature>
<feature type="splice variant" id="VSP_034104" description="In isoform 3." evidence="40">
    <location>
        <begin position="1124"/>
        <end position="1410"/>
    </location>
</feature>
<feature type="sequence variant" id="VAR_051160" description="In dbSNP:rs28986464.">
    <original>R</original>
    <variation>C</variation>
    <location>
        <position position="179"/>
    </location>
</feature>
<feature type="sequence variant" id="VAR_022843" description="In dbSNP:rs2517560." evidence="37">
    <original>E</original>
    <variation>K</variation>
    <location>
        <position position="251"/>
    </location>
</feature>
<feature type="sequence variant" id="VAR_022844" description="In dbSNP:rs9262152." evidence="13 21">
    <original>R</original>
    <variation>K</variation>
    <location>
        <position position="268"/>
    </location>
</feature>
<feature type="sequence variant" id="VAR_022845" description="In dbSNP:rs2075015." evidence="20">
    <original>E</original>
    <variation>K</variation>
    <location>
        <position position="371"/>
    </location>
</feature>
<feature type="sequence variant" id="VAR_051161" description="In dbSNP:rs28986465." evidence="20">
    <original>P</original>
    <variation>L</variation>
    <location>
        <position position="386"/>
    </location>
</feature>
<feature type="sequence variant" id="VAR_043922" description="In dbSNP:rs58344693." evidence="17 36">
    <original>I</original>
    <variation>M</variation>
    <location>
        <position position="536"/>
    </location>
</feature>
<feature type="sequence variant" id="VAR_022846" description="In dbSNP:rs2844707." evidence="37">
    <original>S</original>
    <variation>A</variation>
    <location>
        <position position="586"/>
    </location>
</feature>
<feature type="sequence variant" id="VAR_051162" description="In dbSNP:rs28986467.">
    <original>R</original>
    <variation>S</variation>
    <location>
        <position position="917"/>
    </location>
</feature>
<feature type="sequence variant" id="VAR_051163" description="In dbSNP:rs28994869.">
    <original>P</original>
    <variation>A</variation>
    <location>
        <position position="1100"/>
    </location>
</feature>
<feature type="sequence variant" id="VAR_051164" description="In dbSNP:rs28987085.">
    <original>S</original>
    <variation>F</variation>
    <location>
        <position position="1112"/>
    </location>
</feature>
<feature type="sequence variant" id="VAR_051165" description="In dbSNP:rs9461623." evidence="20">
    <original>S</original>
    <variation>P</variation>
    <location>
        <position position="1180"/>
    </location>
</feature>
<feature type="sequence variant" id="VAR_022847" description="In dbSNP:rs3132589." evidence="20 37">
    <original>E</original>
    <variation>D</variation>
    <location>
        <position position="1509"/>
    </location>
</feature>
<feature type="sequence variant" id="VAR_022848" description="In dbSNP:rs3130645." evidence="17 36 37 49">
    <original>S</original>
    <variation>P</variation>
    <location>
        <position position="1540"/>
    </location>
</feature>
<feature type="sequence variant" id="VAR_043923" description="In dbSNP:rs17292678." evidence="13 17 20 36 37 38">
    <original>Q</original>
    <variation>R</variation>
    <location>
        <position position="1545"/>
    </location>
</feature>
<feature type="sequence variant" id="VAR_051166" description="In dbSNP:rs28994871.">
    <original>P</original>
    <variation>R</variation>
    <location>
        <position position="1745"/>
    </location>
</feature>
<feature type="sequence variant" id="VAR_051167" description="In dbSNP:rs28994873.">
    <original>V</original>
    <variation>E</variation>
    <location>
        <position position="1791"/>
    </location>
</feature>
<feature type="sequence variant" id="VAR_051168" description="In dbSNP:rs28994874.">
    <original>D</original>
    <variation>E</variation>
    <location>
        <position position="1855"/>
    </location>
</feature>
<feature type="sequence variant" id="VAR_051169" description="In dbSNP:rs28994875.">
    <original>R</original>
    <variation>Q</variation>
    <location>
        <position position="1883"/>
    </location>
</feature>
<feature type="sequence variant" id="VAR_051170" description="In dbSNP:rs28994876.">
    <original>R</original>
    <variation>Q</variation>
    <location>
        <position position="1904"/>
    </location>
</feature>
<feature type="mutagenesis site" description="Abrogates binding to the MRE11 complex and to CHEK2." evidence="9 10">
    <original>R</original>
    <variation>A</variation>
    <location>
        <position position="58"/>
    </location>
</feature>
<feature type="mutagenesis site" description="Abrogates binding to CHEK2." evidence="10">
    <original>S</original>
    <variation>A</variation>
    <location>
        <position position="72"/>
    </location>
</feature>
<feature type="mutagenesis site" description="Abrogates binding to CHEK2; when associated with A-97 and A-98." evidence="10">
    <original>N</original>
    <variation>A</variation>
    <location>
        <position position="96"/>
    </location>
</feature>
<feature type="mutagenesis site" description="Abrogates binding to CHEK2; when associated with A-96 and A-98." evidence="10">
    <original>G</original>
    <variation>A</variation>
    <location>
        <position position="97"/>
    </location>
</feature>
<feature type="mutagenesis site" description="Abrogates binding to CHEK2; when associated with A-96 and A-97." evidence="10">
    <original>T</original>
    <variation>A</variation>
    <location>
        <position position="98"/>
    </location>
</feature>
<feature type="mutagenesis site" description="Decreased phosphorylation by CK2, leading to impaired interaction with TOPBP1; when associated with A-196." evidence="34">
    <original>S</original>
    <variation>A</variation>
    <location>
        <position position="168"/>
    </location>
</feature>
<feature type="mutagenesis site" description="Decreased phosphorylation by CK2, leading to impaired interaction with TOPBP1; when associated with A-168." evidence="34">
    <original>S</original>
    <variation>A</variation>
    <location>
        <position position="196"/>
    </location>
</feature>
<feature type="mutagenesis site" description="Decreased phosphorylation by CK2, leading to impaired interaction with NBN." evidence="24">
    <original>SDT</original>
    <variation>ADA</variation>
    <location>
        <begin position="299"/>
        <end position="301"/>
    </location>
</feature>
<feature type="mutagenesis site" description="Decreased phosphorylation by CK2, leading to impaired interaction with NBN." evidence="24">
    <original>SDT</original>
    <variation>ADA</variation>
    <location>
        <begin position="453"/>
        <end position="455"/>
    </location>
</feature>
<feature type="mutagenesis site" description="Suppresses RNF4-mediated ubiquitination, accumulates at sites of DNA damage, defective homologous recombination." evidence="32">
    <original>K</original>
    <variation>R</variation>
    <location>
        <position position="1840"/>
    </location>
</feature>
<feature type="sequence conflict" description="In Ref. 2; CAH18685." evidence="42" ref="2">
    <original>L</original>
    <variation>P</variation>
    <location>
        <position position="638"/>
    </location>
</feature>
<feature type="sequence conflict" description="In Ref. 2; CAH18685." evidence="42" ref="2">
    <location>
        <begin position="645"/>
        <end position="1326"/>
    </location>
</feature>
<feature type="sequence conflict" description="In Ref. 3; BAB63322." evidence="42" ref="3">
    <original>G</original>
    <variation>GS</variation>
    <location>
        <position position="1005"/>
    </location>
</feature>
<feature type="sequence conflict" description="In Ref. 1; BAA11487 and 7; AAI52557." evidence="42" ref="1 7">
    <original>T</original>
    <variation>A</variation>
    <location>
        <position position="1041"/>
    </location>
</feature>
<feature type="sequence conflict" description="In Ref. 4; BAE78617." evidence="42" ref="4">
    <original>Y</original>
    <variation>S</variation>
    <location>
        <position position="1266"/>
    </location>
</feature>
<feature type="sequence conflict" description="In Ref. 4; BAE78617." evidence="42" ref="4">
    <original>P</original>
    <variation>T</variation>
    <location>
        <position position="1283"/>
    </location>
</feature>
<feature type="sequence conflict" description="In Ref. 4; BAC54931/BAF31266." evidence="42" ref="4">
    <original>A</original>
    <variation>T</variation>
    <location>
        <position position="1533"/>
    </location>
</feature>
<feature type="sequence conflict" description="In Ref. 5; BX248307." evidence="42" ref="5">
    <original>E</original>
    <variation>A</variation>
    <location>
        <position position="1536"/>
    </location>
</feature>
<feature type="sequence conflict" description="In Ref. 4; BAE78617." evidence="42" ref="4">
    <original>T</original>
    <variation>S</variation>
    <location>
        <position position="1664"/>
    </location>
</feature>
<feature type="sequence conflict" description="In Ref. 2; CAH18685." evidence="42" ref="2">
    <original>Q</original>
    <variation>R</variation>
    <location>
        <position position="1668"/>
    </location>
</feature>
<feature type="sequence conflict" description="In Ref. 4; BAE78617." evidence="42" ref="4">
    <original>A</original>
    <variation>T</variation>
    <location>
        <position position="1734"/>
    </location>
</feature>
<feature type="helix" evidence="64">
    <location>
        <begin position="21"/>
        <end position="24"/>
    </location>
</feature>
<feature type="strand" evidence="62">
    <location>
        <begin position="32"/>
        <end position="36"/>
    </location>
</feature>
<feature type="strand" evidence="63">
    <location>
        <begin position="39"/>
        <end position="42"/>
    </location>
</feature>
<feature type="strand" evidence="62">
    <location>
        <begin position="45"/>
        <end position="49"/>
    </location>
</feature>
<feature type="strand" evidence="62">
    <location>
        <begin position="51"/>
        <end position="59"/>
    </location>
</feature>
<feature type="strand" evidence="62">
    <location>
        <begin position="62"/>
        <end position="65"/>
    </location>
</feature>
<feature type="strand" evidence="62">
    <location>
        <begin position="76"/>
        <end position="80"/>
    </location>
</feature>
<feature type="strand" evidence="62">
    <location>
        <begin position="88"/>
        <end position="91"/>
    </location>
</feature>
<feature type="strand" evidence="62">
    <location>
        <begin position="98"/>
        <end position="100"/>
    </location>
</feature>
<feature type="turn" evidence="62">
    <location>
        <begin position="101"/>
        <end position="104"/>
    </location>
</feature>
<feature type="strand" evidence="62">
    <location>
        <begin position="120"/>
        <end position="123"/>
    </location>
</feature>
<feature type="strand" evidence="62">
    <location>
        <begin position="126"/>
        <end position="132"/>
    </location>
</feature>
<feature type="strand" evidence="60">
    <location>
        <begin position="1894"/>
        <end position="1897"/>
    </location>
</feature>
<feature type="helix" evidence="60">
    <location>
        <begin position="1903"/>
        <end position="1911"/>
    </location>
</feature>
<feature type="turn" evidence="60">
    <location>
        <begin position="1920"/>
        <end position="1922"/>
    </location>
</feature>
<feature type="strand" evidence="60">
    <location>
        <begin position="1924"/>
        <end position="1927"/>
    </location>
</feature>
<feature type="helix" evidence="60">
    <location>
        <begin position="1935"/>
        <end position="1943"/>
    </location>
</feature>
<feature type="helix" evidence="60">
    <location>
        <begin position="1951"/>
        <end position="1959"/>
    </location>
</feature>
<feature type="helix" evidence="60">
    <location>
        <begin position="1966"/>
        <end position="1968"/>
    </location>
</feature>
<feature type="helix" evidence="60">
    <location>
        <begin position="1973"/>
        <end position="1978"/>
    </location>
</feature>
<feature type="helix" evidence="60">
    <location>
        <begin position="1983"/>
        <end position="1992"/>
    </location>
</feature>
<feature type="turn" evidence="60">
    <location>
        <begin position="1995"/>
        <end position="1998"/>
    </location>
</feature>
<feature type="strand" evidence="60">
    <location>
        <begin position="2000"/>
        <end position="2003"/>
    </location>
</feature>
<feature type="helix" evidence="60">
    <location>
        <begin position="2011"/>
        <end position="2020"/>
    </location>
</feature>
<feature type="strand" evidence="61">
    <location>
        <begin position="2024"/>
        <end position="2026"/>
    </location>
</feature>
<feature type="strand" evidence="60">
    <location>
        <begin position="2037"/>
        <end position="2040"/>
    </location>
</feature>
<feature type="helix" evidence="60">
    <location>
        <begin position="2043"/>
        <end position="2048"/>
    </location>
</feature>
<feature type="helix" evidence="60">
    <location>
        <begin position="2050"/>
        <end position="2055"/>
    </location>
</feature>
<feature type="helix" evidence="60">
    <location>
        <begin position="2063"/>
        <end position="2071"/>
    </location>
</feature>
<feature type="helix" evidence="60">
    <location>
        <begin position="2076"/>
        <end position="2079"/>
    </location>
</feature>
<gene>
    <name evidence="39 43" type="primary">MDC1</name>
    <name evidence="41" type="synonym">KIAA0170</name>
    <name type="synonym">NFBD1</name>
</gene>
<proteinExistence type="evidence at protein level"/>
<reference key="1">
    <citation type="journal article" date="1996" name="DNA Res.">
        <title>Prediction of the coding sequences of unidentified human genes. V. The coding sequences of 40 new genes (KIAA0161-KIAA0200) deduced by analysis of cDNA clones from human cell line KG-1.</title>
        <authorList>
            <person name="Nagase T."/>
            <person name="Seki N."/>
            <person name="Ishikawa K."/>
            <person name="Tanaka A."/>
            <person name="Nomura N."/>
        </authorList>
    </citation>
    <scope>NUCLEOTIDE SEQUENCE [LARGE SCALE MRNA] (ISOFORM 1)</scope>
    <scope>VARIANTS MET-536; PRO-1540 AND ARG-1545</scope>
    <source>
        <tissue>Myelomonocyte</tissue>
    </source>
</reference>
<reference key="2">
    <citation type="journal article" date="2007" name="BMC Genomics">
        <title>The full-ORF clone resource of the German cDNA consortium.</title>
        <authorList>
            <person name="Bechtel S."/>
            <person name="Rosenfelder H."/>
            <person name="Duda A."/>
            <person name="Schmidt C.P."/>
            <person name="Ernst U."/>
            <person name="Wellenreuther R."/>
            <person name="Mehrle A."/>
            <person name="Schuster C."/>
            <person name="Bahr A."/>
            <person name="Bloecker H."/>
            <person name="Heubner D."/>
            <person name="Hoerlein A."/>
            <person name="Michel G."/>
            <person name="Wedler H."/>
            <person name="Koehrer K."/>
            <person name="Ottenwaelder B."/>
            <person name="Poustka A."/>
            <person name="Wiemann S."/>
            <person name="Schupp I."/>
        </authorList>
    </citation>
    <scope>NUCLEOTIDE SEQUENCE [LARGE SCALE MRNA] (ISOFORM 1)</scope>
    <scope>VARIANT LYS-268</scope>
    <source>
        <tissue>Testis</tissue>
    </source>
</reference>
<reference key="3">
    <citation type="submission" date="1999-09" db="EMBL/GenBank/DDBJ databases">
        <title>Homo sapiens 2,229,817bp genomic DNA of 6p21.3 HLA class I region.</title>
        <authorList>
            <person name="Shiina S."/>
            <person name="Tamiya G."/>
            <person name="Oka A."/>
            <person name="Inoko H."/>
        </authorList>
    </citation>
    <scope>NUCLEOTIDE SEQUENCE [LARGE SCALE GENOMIC DNA]</scope>
    <scope>VARIANTS LYS-251; ALA-586; ASP-1509; PRO-1540 AND ARG-1545</scope>
</reference>
<reference key="4">
    <citation type="journal article" date="2006" name="Genetics">
        <title>Rapid evolution of major histocompatibility complex class I genes in primates generates new disease alleles in humans via hitchhiking diversity.</title>
        <authorList>
            <person name="Shiina T."/>
            <person name="Ota M."/>
            <person name="Shimizu S."/>
            <person name="Katsuyama Y."/>
            <person name="Hashimoto N."/>
            <person name="Takasu M."/>
            <person name="Anzai T."/>
            <person name="Kulski J.K."/>
            <person name="Kikkawa E."/>
            <person name="Naruse T."/>
            <person name="Kimura N."/>
            <person name="Yanagiya K."/>
            <person name="Watanabe A."/>
            <person name="Hosomichi K."/>
            <person name="Kohara S."/>
            <person name="Iwamoto C."/>
            <person name="Umehara Y."/>
            <person name="Meyer A."/>
            <person name="Wanner V."/>
            <person name="Sano K."/>
            <person name="Macquin C."/>
            <person name="Ikeo K."/>
            <person name="Tokunaga K."/>
            <person name="Gojobori T."/>
            <person name="Inoko H."/>
            <person name="Bahram S."/>
        </authorList>
    </citation>
    <scope>NUCLEOTIDE SEQUENCE [LARGE SCALE GENOMIC DNA]</scope>
    <scope>VARIANTS LYS-371; LEU-386; PRO-1180; ASP-1509 AND ARG-1545</scope>
    <source>
        <tissue>Peripheral blood leukocyte</tissue>
    </source>
</reference>
<reference key="5">
    <citation type="journal article" date="2003" name="Nature">
        <title>The DNA sequence and analysis of human chromosome 6.</title>
        <authorList>
            <person name="Mungall A.J."/>
            <person name="Palmer S.A."/>
            <person name="Sims S.K."/>
            <person name="Edwards C.A."/>
            <person name="Ashurst J.L."/>
            <person name="Wilming L."/>
            <person name="Jones M.C."/>
            <person name="Horton R."/>
            <person name="Hunt S.E."/>
            <person name="Scott C.E."/>
            <person name="Gilbert J.G.R."/>
            <person name="Clamp M.E."/>
            <person name="Bethel G."/>
            <person name="Milne S."/>
            <person name="Ainscough R."/>
            <person name="Almeida J.P."/>
            <person name="Ambrose K.D."/>
            <person name="Andrews T.D."/>
            <person name="Ashwell R.I.S."/>
            <person name="Babbage A.K."/>
            <person name="Bagguley C.L."/>
            <person name="Bailey J."/>
            <person name="Banerjee R."/>
            <person name="Barker D.J."/>
            <person name="Barlow K.F."/>
            <person name="Bates K."/>
            <person name="Beare D.M."/>
            <person name="Beasley H."/>
            <person name="Beasley O."/>
            <person name="Bird C.P."/>
            <person name="Blakey S.E."/>
            <person name="Bray-Allen S."/>
            <person name="Brook J."/>
            <person name="Brown A.J."/>
            <person name="Brown J.Y."/>
            <person name="Burford D.C."/>
            <person name="Burrill W."/>
            <person name="Burton J."/>
            <person name="Carder C."/>
            <person name="Carter N.P."/>
            <person name="Chapman J.C."/>
            <person name="Clark S.Y."/>
            <person name="Clark G."/>
            <person name="Clee C.M."/>
            <person name="Clegg S."/>
            <person name="Cobley V."/>
            <person name="Collier R.E."/>
            <person name="Collins J.E."/>
            <person name="Colman L.K."/>
            <person name="Corby N.R."/>
            <person name="Coville G.J."/>
            <person name="Culley K.M."/>
            <person name="Dhami P."/>
            <person name="Davies J."/>
            <person name="Dunn M."/>
            <person name="Earthrowl M.E."/>
            <person name="Ellington A.E."/>
            <person name="Evans K.A."/>
            <person name="Faulkner L."/>
            <person name="Francis M.D."/>
            <person name="Frankish A."/>
            <person name="Frankland J."/>
            <person name="French L."/>
            <person name="Garner P."/>
            <person name="Garnett J."/>
            <person name="Ghori M.J."/>
            <person name="Gilby L.M."/>
            <person name="Gillson C.J."/>
            <person name="Glithero R.J."/>
            <person name="Grafham D.V."/>
            <person name="Grant M."/>
            <person name="Gribble S."/>
            <person name="Griffiths C."/>
            <person name="Griffiths M.N.D."/>
            <person name="Hall R."/>
            <person name="Halls K.S."/>
            <person name="Hammond S."/>
            <person name="Harley J.L."/>
            <person name="Hart E.A."/>
            <person name="Heath P.D."/>
            <person name="Heathcott R."/>
            <person name="Holmes S.J."/>
            <person name="Howden P.J."/>
            <person name="Howe K.L."/>
            <person name="Howell G.R."/>
            <person name="Huckle E."/>
            <person name="Humphray S.J."/>
            <person name="Humphries M.D."/>
            <person name="Hunt A.R."/>
            <person name="Johnson C.M."/>
            <person name="Joy A.A."/>
            <person name="Kay M."/>
            <person name="Keenan S.J."/>
            <person name="Kimberley A.M."/>
            <person name="King A."/>
            <person name="Laird G.K."/>
            <person name="Langford C."/>
            <person name="Lawlor S."/>
            <person name="Leongamornlert D.A."/>
            <person name="Leversha M."/>
            <person name="Lloyd C.R."/>
            <person name="Lloyd D.M."/>
            <person name="Loveland J.E."/>
            <person name="Lovell J."/>
            <person name="Martin S."/>
            <person name="Mashreghi-Mohammadi M."/>
            <person name="Maslen G.L."/>
            <person name="Matthews L."/>
            <person name="McCann O.T."/>
            <person name="McLaren S.J."/>
            <person name="McLay K."/>
            <person name="McMurray A."/>
            <person name="Moore M.J.F."/>
            <person name="Mullikin J.C."/>
            <person name="Niblett D."/>
            <person name="Nickerson T."/>
            <person name="Novik K.L."/>
            <person name="Oliver K."/>
            <person name="Overton-Larty E.K."/>
            <person name="Parker A."/>
            <person name="Patel R."/>
            <person name="Pearce A.V."/>
            <person name="Peck A.I."/>
            <person name="Phillimore B.J.C.T."/>
            <person name="Phillips S."/>
            <person name="Plumb R.W."/>
            <person name="Porter K.M."/>
            <person name="Ramsey Y."/>
            <person name="Ranby S.A."/>
            <person name="Rice C.M."/>
            <person name="Ross M.T."/>
            <person name="Searle S.M."/>
            <person name="Sehra H.K."/>
            <person name="Sheridan E."/>
            <person name="Skuce C.D."/>
            <person name="Smith S."/>
            <person name="Smith M."/>
            <person name="Spraggon L."/>
            <person name="Squares S.L."/>
            <person name="Steward C.A."/>
            <person name="Sycamore N."/>
            <person name="Tamlyn-Hall G."/>
            <person name="Tester J."/>
            <person name="Theaker A.J."/>
            <person name="Thomas D.W."/>
            <person name="Thorpe A."/>
            <person name="Tracey A."/>
            <person name="Tromans A."/>
            <person name="Tubby B."/>
            <person name="Wall M."/>
            <person name="Wallis J.M."/>
            <person name="West A.P."/>
            <person name="White S.S."/>
            <person name="Whitehead S.L."/>
            <person name="Whittaker H."/>
            <person name="Wild A."/>
            <person name="Willey D.J."/>
            <person name="Wilmer T.E."/>
            <person name="Wood J.M."/>
            <person name="Wray P.W."/>
            <person name="Wyatt J.C."/>
            <person name="Young L."/>
            <person name="Younger R.M."/>
            <person name="Bentley D.R."/>
            <person name="Coulson A."/>
            <person name="Durbin R.M."/>
            <person name="Hubbard T."/>
            <person name="Sulston J.E."/>
            <person name="Dunham I."/>
            <person name="Rogers J."/>
            <person name="Beck S."/>
        </authorList>
    </citation>
    <scope>NUCLEOTIDE SEQUENCE [LARGE SCALE GENOMIC DNA]</scope>
    <scope>VARIANTS LYS-268 AND ARG-1545</scope>
</reference>
<reference key="6">
    <citation type="submission" date="2005-07" db="EMBL/GenBank/DDBJ databases">
        <authorList>
            <person name="Mural R.J."/>
            <person name="Istrail S."/>
            <person name="Sutton G.G."/>
            <person name="Florea L."/>
            <person name="Halpern A.L."/>
            <person name="Mobarry C.M."/>
            <person name="Lippert R."/>
            <person name="Walenz B."/>
            <person name="Shatkay H."/>
            <person name="Dew I."/>
            <person name="Miller J.R."/>
            <person name="Flanigan M.J."/>
            <person name="Edwards N.J."/>
            <person name="Bolanos R."/>
            <person name="Fasulo D."/>
            <person name="Halldorsson B.V."/>
            <person name="Hannenhalli S."/>
            <person name="Turner R."/>
            <person name="Yooseph S."/>
            <person name="Lu F."/>
            <person name="Nusskern D.R."/>
            <person name="Shue B.C."/>
            <person name="Zheng X.H."/>
            <person name="Zhong F."/>
            <person name="Delcher A.L."/>
            <person name="Huson D.H."/>
            <person name="Kravitz S.A."/>
            <person name="Mouchard L."/>
            <person name="Reinert K."/>
            <person name="Remington K.A."/>
            <person name="Clark A.G."/>
            <person name="Waterman M.S."/>
            <person name="Eichler E.E."/>
            <person name="Adams M.D."/>
            <person name="Hunkapiller M.W."/>
            <person name="Myers E.W."/>
            <person name="Venter J.C."/>
        </authorList>
    </citation>
    <scope>NUCLEOTIDE SEQUENCE [LARGE SCALE GENOMIC DNA]</scope>
    <scope>VARIANT ARG-1545</scope>
</reference>
<reference key="7">
    <citation type="journal article" date="2004" name="Genome Res.">
        <title>The status, quality, and expansion of the NIH full-length cDNA project: the Mammalian Gene Collection (MGC).</title>
        <authorList>
            <consortium name="The MGC Project Team"/>
        </authorList>
    </citation>
    <scope>NUCLEOTIDE SEQUENCE [LARGE SCALE MRNA] (ISOFORM 3)</scope>
    <scope>NUCLEOTIDE SEQUENCE [LARGE SCALE MRNA] OF 279-2089 (ISOFORM 4)</scope>
    <scope>VARIANTS MET-536; PRO-1540 AND ARG-1545</scope>
    <source>
        <tissue>Pancreas</tissue>
    </source>
</reference>
<reference key="8">
    <citation type="journal article" date="2003" name="Cancer Res.">
        <title>53BP1 and NFBD1/MDC1-Nbs1 function in parallel interacting pathways activating ataxia-telangiectasia mutated (ATM) in response to DNA damage.</title>
        <authorList>
            <person name="Mochan T.A."/>
            <person name="Venere M."/>
            <person name="DiTullio R.A. Jr."/>
            <person name="Halazonetis T.D."/>
        </authorList>
    </citation>
    <scope>FUNCTION</scope>
    <scope>SUBCELLULAR LOCATION</scope>
</reference>
<reference key="9">
    <citation type="journal article" date="2003" name="J. Biol. Chem.">
        <title>NFBD1, a novel nuclear protein with signature motifs of FHA and BRCT, and an internal 41-amino acid repeat sequence, is an early participant in DNA damage response.</title>
        <authorList>
            <person name="Shang Y.L."/>
            <person name="Bodero A.J."/>
            <person name="Chen P.-L."/>
        </authorList>
    </citation>
    <scope>FUNCTION</scope>
    <scope>SUBCELLULAR LOCATION</scope>
</reference>
<reference key="10">
    <citation type="journal article" date="2003" name="J. Biol. Chem.">
        <title>NFBD1/KIAA0170 is a chromatin-associated protein involved in DNA damage signaling pathways.</title>
        <authorList>
            <person name="Xu X."/>
            <person name="Stern D.F."/>
        </authorList>
    </citation>
    <scope>FUNCTION</scope>
    <scope>SUBCELLULAR LOCATION</scope>
    <scope>TISSUE SPECIFICITY</scope>
    <scope>ATM- AND CELL CYCLE-DEPENDENT PHOSPHORYLATION</scope>
    <scope>DOMAINS NLS1 AND NLS2</scope>
</reference>
<reference key="11">
    <citation type="journal article" date="2003" name="J. Biol. Chem.">
        <title>NFBD1, like 53BP1, is an early and redundant transducer mediating Chk2 phosphorylation in response to DNA damage.</title>
        <authorList>
            <person name="Peng A."/>
            <person name="Chen P.-L."/>
        </authorList>
    </citation>
    <scope>FUNCTION</scope>
    <scope>SUBCELLULAR LOCATION</scope>
    <scope>INTERACTION WITH CHEK2</scope>
</reference>
<reference key="12">
    <citation type="journal article" date="2003" name="J. Biol. Chem.">
        <title>Mediator of DNA damage checkpoint protein 1 regulates BRCA1 localization and phosphorylation in DNA damage checkpoint control.</title>
        <authorList>
            <person name="Lou Z."/>
            <person name="Chini C.C.S."/>
            <person name="Minter-Dykhouse K."/>
            <person name="Chen J."/>
        </authorList>
    </citation>
    <scope>FUNCTION</scope>
    <scope>SUBCELLULAR LOCATION</scope>
    <scope>INTERACTION WITH BRCA1 AND BARD1</scope>
</reference>
<reference key="13">
    <citation type="journal article" date="2003" name="Nature">
        <title>MDC1 is required for the intra-S-phase DNA damage checkpoint.</title>
        <authorList>
            <person name="Goldberg M."/>
            <person name="Stucki M."/>
            <person name="Falck J."/>
            <person name="D'Amours D."/>
            <person name="Rahman D."/>
            <person name="Pappin D."/>
            <person name="Bartek J."/>
            <person name="Jackson S.P."/>
        </authorList>
    </citation>
    <scope>FUNCTION</scope>
    <scope>IDENTIFICATION BY MASS SPECTROMETRY</scope>
    <scope>SUBCELLULAR LOCATION</scope>
    <scope>INTERACTION WITH THE MRN COMPLEX</scope>
    <scope>PHOSPHORYLATION BY ATM</scope>
    <scope>MUTAGENESIS OF ARG-58</scope>
</reference>
<reference key="14">
    <citation type="journal article" date="2003" name="Nature">
        <title>MDC1 is coupled to activated CHK2 in mammalian DNA damage response pathways.</title>
        <authorList>
            <person name="Lou Z."/>
            <person name="Minter-Dykhouse K."/>
            <person name="Wu X."/>
            <person name="Chen J."/>
        </authorList>
    </citation>
    <scope>FUNCTION</scope>
    <scope>SUBCELLULAR LOCATION</scope>
    <scope>INTERACTION WITH CHEK2</scope>
    <scope>PHOSPHORYLATION BY ATM AND CHEK2</scope>
    <scope>MUTAGENESIS OF ARG-58; SER-72; ASN-96; GLY-97 AND THR-98</scope>
</reference>
<reference key="15">
    <citation type="journal article" date="2003" name="Nature">
        <title>MDC1 is a mediator of the mammalian DNA damage checkpoint.</title>
        <authorList>
            <person name="Stewart G.S."/>
            <person name="Wang B."/>
            <person name="Bignell C.R."/>
            <person name="Taylor A.M.R."/>
            <person name="Elledge S.J."/>
        </authorList>
    </citation>
    <scope>FUNCTION</scope>
    <scope>SUBCELLULAR LOCATION</scope>
    <scope>INTERACTION WITH THE MRN COMPLEX; ATM; FANCD2; H2AX; SMC1A AND TP53BP1</scope>
    <scope>PHOSPHORYLATION BY ATM</scope>
</reference>
<reference key="16">
    <citation type="journal article" date="2004" name="DNA Repair">
        <title>MDC1/NFBD1: a key regulator of the DNA damage response in higher eukaryotes.</title>
        <authorList>
            <person name="Stucki M."/>
            <person name="Jackson S.P."/>
        </authorList>
    </citation>
    <scope>REVIEW</scope>
</reference>
<reference key="17">
    <citation type="journal article" date="2004" name="EMBO J.">
        <title>Mdc1 couples DNA double-strand break recognition by Nbs1 with its H2AX-dependent chromatin retention.</title>
        <authorList>
            <person name="Lukas C."/>
            <person name="Melander F."/>
            <person name="Stucki M."/>
            <person name="Falck J."/>
            <person name="Bekker-Jensen S."/>
            <person name="Goldberg M."/>
            <person name="Lerenthal Y."/>
            <person name="Jackson S.P."/>
            <person name="Bartek J."/>
            <person name="Lukas J."/>
        </authorList>
    </citation>
    <scope>FUNCTION</scope>
    <scope>SUBCELLULAR LOCATION</scope>
    <scope>INTERACTION WITH H2AX</scope>
</reference>
<reference key="18">
    <citation type="journal article" date="2004" name="J. Biol. Chem.">
        <title>MDC1 regulates DNA-PK autophosphorylation in response to DNA damage.</title>
        <authorList>
            <person name="Lou Z."/>
            <person name="Chen B.P.-C."/>
            <person name="Asaithamby A."/>
            <person name="Minter-Dykhouse K."/>
            <person name="Chen D.J."/>
            <person name="Chen J."/>
        </authorList>
    </citation>
    <scope>FUNCTION</scope>
    <scope>SUBCELLULAR LOCATION</scope>
    <scope>INTERACTION WITH THE PRKDC COMPLEX</scope>
</reference>
<reference key="19">
    <citation type="journal article" date="2006" name="Cell">
        <title>Global, in vivo, and site-specific phosphorylation dynamics in signaling networks.</title>
        <authorList>
            <person name="Olsen J.V."/>
            <person name="Blagoev B."/>
            <person name="Gnad F."/>
            <person name="Macek B."/>
            <person name="Kumar C."/>
            <person name="Mortensen P."/>
            <person name="Mann M."/>
        </authorList>
    </citation>
    <scope>PHOSPHORYLATION [LARGE SCALE ANALYSIS] AT SER-168</scope>
    <scope>IDENTIFICATION BY MASS SPECTROMETRY [LARGE SCALE ANALYSIS]</scope>
    <source>
        <tissue>Cervix carcinoma</tissue>
    </source>
</reference>
<reference key="20">
    <citation type="journal article" date="2007" name="Mol. Cell. Proteomics">
        <title>Quantitative phosphoproteome profiling of Wnt3a-mediated signaling network: indicating the involvement of ribonucleoside-diphosphate reductase M2 subunit phosphorylation at residue serine 20 in canonical Wnt signal transduction.</title>
        <authorList>
            <person name="Tang L.-Y."/>
            <person name="Deng N."/>
            <person name="Wang L.-S."/>
            <person name="Dai J."/>
            <person name="Wang Z.-L."/>
            <person name="Jiang X.-S."/>
            <person name="Li S.-J."/>
            <person name="Li L."/>
            <person name="Sheng Q.-H."/>
            <person name="Wu D.-Q."/>
            <person name="Li L."/>
            <person name="Zeng R."/>
        </authorList>
    </citation>
    <scope>PHOSPHORYLATION [LARGE SCALE ANALYSIS] AT SER-168</scope>
    <scope>IDENTIFICATION BY MASS SPECTROMETRY [LARGE SCALE ANALYSIS]</scope>
    <source>
        <tissue>Embryonic kidney</tissue>
    </source>
</reference>
<reference key="21">
    <citation type="journal article" date="2007" name="Science">
        <title>ATM and ATR substrate analysis reveals extensive protein networks responsive to DNA damage.</title>
        <authorList>
            <person name="Matsuoka S."/>
            <person name="Ballif B.A."/>
            <person name="Smogorzewska A."/>
            <person name="McDonald E.R. III"/>
            <person name="Hurov K.E."/>
            <person name="Luo J."/>
            <person name="Bakalarski C.E."/>
            <person name="Zhao Z."/>
            <person name="Solimini N."/>
            <person name="Lerenthal Y."/>
            <person name="Shiloh Y."/>
            <person name="Gygi S.P."/>
            <person name="Elledge S.J."/>
        </authorList>
    </citation>
    <scope>PHOSPHORYLATION [LARGE SCALE ANALYSIS] AT SER-372; SER-376; THR-378; SER-513; THR-523 AND SER-780</scope>
    <scope>IDENTIFICATION BY MASS SPECTROMETRY [LARGE SCALE ANALYSIS]</scope>
    <source>
        <tissue>Embryonic kidney</tissue>
    </source>
</reference>
<reference key="22">
    <citation type="journal article" date="2007" name="Science">
        <title>Orchestration of the DNA-damage response by the RNF8 ubiquitin ligase.</title>
        <authorList>
            <person name="Kolas N.K."/>
            <person name="Chapman J.R."/>
            <person name="Nakada S."/>
            <person name="Ylanko J."/>
            <person name="Chahwan R."/>
            <person name="Sweeney F.D."/>
            <person name="Panier S."/>
            <person name="Mendez M."/>
            <person name="Wildenhain J."/>
            <person name="Thomson T.M."/>
            <person name="Pelletier L."/>
            <person name="Jackson S.P."/>
            <person name="Durocher D."/>
        </authorList>
    </citation>
    <scope>INTERACTION WITH RNF8</scope>
</reference>
<reference key="23">
    <citation type="journal article" date="2008" name="EMBO Rep.">
        <title>Phospho-dependent interactions between NBS1 and MDC1 mediate chromatin retention of the MRN complex at sites of DNA damage.</title>
        <authorList>
            <person name="Chapman J.R."/>
            <person name="Jackson S.P."/>
        </authorList>
    </citation>
    <scope>FUNCTION</scope>
    <scope>SUBCELLULAR LOCATION</scope>
    <scope>INTERACTION WITH NBN</scope>
    <scope>PHOSPHORYLATION AT SER-329 AND THR-331</scope>
</reference>
<reference key="24">
    <citation type="journal article" date="2008" name="Genes Dev.">
        <title>Cep164 is a mediator protein required for the maintenance of genomic stability through modulation of MDC1, RPA, and CHK1.</title>
        <authorList>
            <person name="Sivasubramaniam S."/>
            <person name="Sun X."/>
            <person name="Pan Y.R."/>
            <person name="Wang S."/>
            <person name="Lee E.Y."/>
        </authorList>
    </citation>
    <scope>INTERACTION WITH CEP164</scope>
</reference>
<reference key="25">
    <citation type="journal article" date="2008" name="J. Cell Biol.">
        <title>Phosphorylation of SDT repeats in the MDC1 N terminus triggers retention of NBS1 at the DNA damage-modified chromatin.</title>
        <authorList>
            <person name="Melander F."/>
            <person name="Bekker-Jensen S."/>
            <person name="Falck J."/>
            <person name="Bartek J."/>
            <person name="Mailand N."/>
            <person name="Lukas J."/>
        </authorList>
    </citation>
    <scope>FUNCTION</scope>
    <scope>SUBCELLULAR LOCATION</scope>
    <scope>INTERACTION WITH NBN</scope>
    <scope>PHOSPHORYLATION AT SER-299; THR-301; SER-329; THR-331; SER-402; THR-404; SER-453 AND THR-455</scope>
    <scope>MUTAGENESIS OF 299-SER--THR-301 AND 453-SER--THR-455</scope>
</reference>
<reference key="26">
    <citation type="journal article" date="2008" name="J. Mol. Biol.">
        <title>Structure of a second BRCT domain identified in the nijmegen breakage syndrome protein Nbs1 and its function in an MDC1-dependent localization of Nbs1 to DNA damage sites.</title>
        <authorList>
            <person name="Xu C."/>
            <person name="Wu L."/>
            <person name="Cui G."/>
            <person name="Botuyan M.V."/>
            <person name="Chen J."/>
            <person name="Mer G."/>
        </authorList>
    </citation>
    <scope>FUNCTION</scope>
    <scope>SUBCELLULAR LOCATION</scope>
    <scope>INTERACTION WITH NBN</scope>
</reference>
<reference key="27">
    <citation type="journal article" date="2008" name="J. Proteome Res.">
        <title>Combining protein-based IMAC, peptide-based IMAC, and MudPIT for efficient phosphoproteomic analysis.</title>
        <authorList>
            <person name="Cantin G.T."/>
            <person name="Yi W."/>
            <person name="Lu B."/>
            <person name="Park S.K."/>
            <person name="Xu T."/>
            <person name="Lee J.-D."/>
            <person name="Yates J.R. III"/>
        </authorList>
    </citation>
    <scope>PHOSPHORYLATION [LARGE SCALE ANALYSIS] AT THR-1403 AND THR-1425</scope>
    <scope>IDENTIFICATION BY MASS SPECTROMETRY [LARGE SCALE ANALYSIS]</scope>
    <source>
        <tissue>Cervix carcinoma</tissue>
    </source>
</reference>
<reference key="28">
    <citation type="journal article" date="2008" name="Proc. Natl. Acad. Sci. U.S.A.">
        <title>MDC1 regulates intra-S-phase checkpoint by targeting NBS1 to DNA double-strand breaks.</title>
        <authorList>
            <person name="Wu L."/>
            <person name="Luo K."/>
            <person name="Lou Z."/>
            <person name="Chen J."/>
        </authorList>
    </citation>
    <scope>FUNCTION</scope>
    <scope>SUBCELLULAR LOCATION</scope>
    <scope>INTERACTION WITH NBN</scope>
    <scope>PHOSPHORYLATION AT SER-218; THR-220; SER-299; THR-301; SER-329; THR-331; SER-376; THR-378; ; SER-402; THR-404; SER-453 AND THR-455</scope>
</reference>
<reference key="29">
    <citation type="journal article" date="2008" name="Proc. Natl. Acad. Sci. U.S.A.">
        <title>A quantitative atlas of mitotic phosphorylation.</title>
        <authorList>
            <person name="Dephoure N."/>
            <person name="Zhou C."/>
            <person name="Villen J."/>
            <person name="Beausoleil S.A."/>
            <person name="Bakalarski C.E."/>
            <person name="Elledge S.J."/>
            <person name="Gygi S.P."/>
        </authorList>
    </citation>
    <scope>PHOSPHORYLATION [LARGE SCALE ANALYSIS] AT SER-299; THR-301; SER-394; SER-397; SER-402; THR-404; THR-449; SER-453; THR-455; SER-495; SER-498; SER-513; SER-780; SER-793; SER-1033; SER-1068; THR-1198; SER-1399; SER-1400; THR-1403; THR-1425; THR-1466; THR-1548; THR-1589; SER-1604; THR-1630; THR-1664; THR-1671; SER-1681; THR-1697; SER-1702; SER-1711; SER-1775 AND THR-1858</scope>
    <scope>VARIANT [LARGE SCALE ANALYSIS] PRO-1540</scope>
    <scope>IDENTIFICATION BY MASS SPECTROMETRY [LARGE SCALE ANALYSIS]</scope>
    <source>
        <tissue>Cervix carcinoma</tissue>
    </source>
</reference>
<reference key="30">
    <citation type="journal article" date="2009" name="Anal. Chem.">
        <title>Lys-N and trypsin cover complementary parts of the phosphoproteome in a refined SCX-based approach.</title>
        <authorList>
            <person name="Gauci S."/>
            <person name="Helbig A.O."/>
            <person name="Slijper M."/>
            <person name="Krijgsveld J."/>
            <person name="Heck A.J."/>
            <person name="Mohammed S."/>
        </authorList>
    </citation>
    <scope>IDENTIFICATION BY MASS SPECTROMETRY [LARGE SCALE ANALYSIS]</scope>
</reference>
<reference key="31">
    <citation type="journal article" date="2009" name="Sci. Signal.">
        <title>Quantitative phosphoproteomic analysis of T cell receptor signaling reveals system-wide modulation of protein-protein interactions.</title>
        <authorList>
            <person name="Mayya V."/>
            <person name="Lundgren D.H."/>
            <person name="Hwang S.-I."/>
            <person name="Rezaul K."/>
            <person name="Wu L."/>
            <person name="Eng J.K."/>
            <person name="Rodionov V."/>
            <person name="Han D.K."/>
        </authorList>
    </citation>
    <scope>PHOSPHORYLATION [LARGE SCALE ANALYSIS] AT SER-168; SER-329; THR-331; SER-372; SER-376; THR-378; SER-402; THR-404; SER-411; THR-449; SER-453; THR-455; THR-1157 AND THR-1466</scope>
    <scope>IDENTIFICATION BY MASS SPECTROMETRY [LARGE SCALE ANALYSIS]</scope>
    <source>
        <tissue>Leukemic T-cell</tissue>
    </source>
</reference>
<reference key="32">
    <citation type="journal article" date="2009" name="Science">
        <title>Lysine acetylation targets protein complexes and co-regulates major cellular functions.</title>
        <authorList>
            <person name="Choudhary C."/>
            <person name="Kumar C."/>
            <person name="Gnad F."/>
            <person name="Nielsen M.L."/>
            <person name="Rehman M."/>
            <person name="Walther T.C."/>
            <person name="Olsen J.V."/>
            <person name="Mann M."/>
        </authorList>
    </citation>
    <scope>ACETYLATION [LARGE SCALE ANALYSIS] AT LYS-812 AND LYS-1402</scope>
    <scope>IDENTIFICATION BY MASS SPECTROMETRY [LARGE SCALE ANALYSIS]</scope>
</reference>
<reference key="33">
    <citation type="journal article" date="2010" name="Nucleic Acids Res.">
        <title>CK2 phosphorylation-dependent interaction between aprataxin and MDC1 in the DNA damage response.</title>
        <authorList>
            <person name="Becherel O.J."/>
            <person name="Jakob B."/>
            <person name="Cherry A.L."/>
            <person name="Gueven N."/>
            <person name="Fusser M."/>
            <person name="Kijas A.W."/>
            <person name="Peng C."/>
            <person name="Katyal S."/>
            <person name="McKinnon P.J."/>
            <person name="Chen J."/>
            <person name="Epe B."/>
            <person name="Smerdon S.J."/>
            <person name="Taucher-Scholz G."/>
            <person name="Lavin M.F."/>
        </authorList>
    </citation>
    <scope>SUBCELLULAR LOCATION</scope>
    <scope>INTERACTION WITH APTX</scope>
</reference>
<reference key="34">
    <citation type="journal article" date="2010" name="Sci. Signal.">
        <title>Quantitative phosphoproteomics reveals widespread full phosphorylation site occupancy during mitosis.</title>
        <authorList>
            <person name="Olsen J.V."/>
            <person name="Vermeulen M."/>
            <person name="Santamaria A."/>
            <person name="Kumar C."/>
            <person name="Miller M.L."/>
            <person name="Jensen L.J."/>
            <person name="Gnad F."/>
            <person name="Cox J."/>
            <person name="Jensen T.S."/>
            <person name="Nigg E.A."/>
            <person name="Brunak S."/>
            <person name="Mann M."/>
        </authorList>
    </citation>
    <scope>PHOSPHORYLATION [LARGE SCALE ANALYSIS] AT SER-108; SER-168; SER-329; THR-331; SER-402; THR-404; SER-485; SER-513; SER-955; SER-1068; SER-1399; THR-1403; THR-1425; THR-1589; SER-1775; THR-1800 AND SER-1820</scope>
    <scope>IDENTIFICATION BY MASS SPECTROMETRY [LARGE SCALE ANALYSIS]</scope>
    <source>
        <tissue>Cervix carcinoma</tissue>
    </source>
</reference>
<reference key="35">
    <citation type="journal article" date="2011" name="J. Cell Biol.">
        <title>MDC1 collaborates with TopBP1 in DNA replication checkpoint control.</title>
        <authorList>
            <person name="Wang J."/>
            <person name="Gong Z."/>
            <person name="Chen J."/>
        </authorList>
    </citation>
    <scope>SUBCELLULAR LOCATION</scope>
    <scope>INTERACTION WITH TOPBP1</scope>
</reference>
<reference key="36">
    <citation type="journal article" date="2011" name="Sci. Signal.">
        <title>System-wide temporal characterization of the proteome and phosphoproteome of human embryonic stem cell differentiation.</title>
        <authorList>
            <person name="Rigbolt K.T."/>
            <person name="Prokhorova T.A."/>
            <person name="Akimov V."/>
            <person name="Henningsen J."/>
            <person name="Johansen P.T."/>
            <person name="Kratchmarova I."/>
            <person name="Kassem M."/>
            <person name="Mann M."/>
            <person name="Olsen J.V."/>
            <person name="Blagoev B."/>
        </authorList>
    </citation>
    <scope>PHOSPHORYLATION [LARGE SCALE ANALYSIS] AT SER-299; THR-301; SER-329; SER-402; THR-404; THR-455; SER-495; SER-498; THR-1567 AND SER-1820</scope>
    <scope>IDENTIFICATION BY MASS SPECTROMETRY [LARGE SCALE ANALYSIS]</scope>
</reference>
<reference key="37">
    <citation type="journal article" date="2012" name="EMBO J.">
        <title>Sumoylation of MDC1 is important for proper DNA damage response.</title>
        <authorList>
            <person name="Luo K."/>
            <person name="Zhang H."/>
            <person name="Wang L."/>
            <person name="Yuan J."/>
            <person name="Lou Z."/>
        </authorList>
    </citation>
    <scope>SUMOYLATION AT LYS-1840</scope>
    <scope>UBIQUITINATION BY RNF4</scope>
    <scope>MUTAGENESIS OF LYS-1840</scope>
    <scope>INTERACTION WITH TP53BP1</scope>
</reference>
<reference key="38">
    <citation type="journal article" date="2013" name="J. Proteome Res.">
        <title>Toward a comprehensive characterization of a human cancer cell phosphoproteome.</title>
        <authorList>
            <person name="Zhou H."/>
            <person name="Di Palma S."/>
            <person name="Preisinger C."/>
            <person name="Peng M."/>
            <person name="Polat A.N."/>
            <person name="Heck A.J."/>
            <person name="Mohammed S."/>
        </authorList>
    </citation>
    <scope>PHOSPHORYLATION [LARGE SCALE ANALYSIS] AT SER-108; THR-146; SER-168; SER-299; SER-376; SER-453; THR-455; SER-485; SER-495; SER-498; SER-513; THR-523; SER-780; SER-998; SER-1086; THR-1157; SER-1399; SER-1400; THR-1403; THR-1425; SER-1564; THR-1589; THR-1671; SER-1775 AND SER-1820</scope>
    <scope>IDENTIFICATION BY MASS SPECTROMETRY [LARGE SCALE ANALYSIS]</scope>
    <source>
        <tissue>Cervix carcinoma</tissue>
        <tissue>Erythroleukemia</tissue>
    </source>
</reference>
<reference key="39">
    <citation type="journal article" date="2014" name="J. Proteomics">
        <title>An enzyme assisted RP-RPLC approach for in-depth analysis of human liver phosphoproteome.</title>
        <authorList>
            <person name="Bian Y."/>
            <person name="Song C."/>
            <person name="Cheng K."/>
            <person name="Dong M."/>
            <person name="Wang F."/>
            <person name="Huang J."/>
            <person name="Sun D."/>
            <person name="Wang L."/>
            <person name="Ye M."/>
            <person name="Zou H."/>
        </authorList>
    </citation>
    <scope>PHOSPHORYLATION [LARGE SCALE ANALYSIS] AT SER-108; SER-168; SER-329; SER-485; SER-780; THR-1157; THR-1198; THR-1239; THR-1280; THR-1302 AND THR-1608</scope>
    <scope>IDENTIFICATION BY MASS SPECTROMETRY [LARGE SCALE ANALYSIS]</scope>
    <source>
        <tissue>Liver</tissue>
    </source>
</reference>
<reference key="40">
    <citation type="journal article" date="2014" name="Mol. Cell. Proteomics">
        <title>Immunoaffinity enrichment and mass spectrometry analysis of protein methylation.</title>
        <authorList>
            <person name="Guo A."/>
            <person name="Gu H."/>
            <person name="Zhou J."/>
            <person name="Mulhern D."/>
            <person name="Wang Y."/>
            <person name="Lee K.A."/>
            <person name="Yang V."/>
            <person name="Aguiar M."/>
            <person name="Kornhauser J."/>
            <person name="Jia X."/>
            <person name="Ren J."/>
            <person name="Beausoleil S.A."/>
            <person name="Silva J.C."/>
            <person name="Vemulapalli V."/>
            <person name="Bedford M.T."/>
            <person name="Comb M.J."/>
        </authorList>
    </citation>
    <scope>METHYLATION [LARGE SCALE ANALYSIS] AT ARG-1943</scope>
    <scope>IDENTIFICATION BY MASS SPECTROMETRY [LARGE SCALE ANALYSIS]</scope>
    <source>
        <tissue>Colon carcinoma</tissue>
    </source>
</reference>
<reference key="41">
    <citation type="journal article" date="2014" name="Nat. Struct. Mol. Biol.">
        <title>Uncovering global SUMOylation signaling networks in a site-specific manner.</title>
        <authorList>
            <person name="Hendriks I.A."/>
            <person name="D'Souza R.C."/>
            <person name="Yang B."/>
            <person name="Verlaan-de Vries M."/>
            <person name="Mann M."/>
            <person name="Vertegaal A.C."/>
        </authorList>
    </citation>
    <scope>SUMOYLATION [LARGE SCALE ANALYSIS] AT LYS-1840</scope>
    <scope>IDENTIFICATION BY MASS SPECTROMETRY [LARGE SCALE ANALYSIS]</scope>
</reference>
<reference key="42">
    <citation type="journal article" date="2014" name="Proc. Natl. Acad. Sci. U.S.A.">
        <title>Mapping of SUMO sites and analysis of SUMOylation changes induced by external stimuli.</title>
        <authorList>
            <person name="Impens F."/>
            <person name="Radoshevich L."/>
            <person name="Cossart P."/>
            <person name="Ribet D."/>
        </authorList>
    </citation>
    <scope>SUMOYLATION [LARGE SCALE ANALYSIS] AT LYS-616 AND LYS-1413</scope>
    <scope>IDENTIFICATION BY MASS SPECTROMETRY [LARGE SCALE ANALYSIS]</scope>
</reference>
<reference key="43">
    <citation type="journal article" date="2017" name="Nat. Struct. Mol. Biol.">
        <title>Site-specific mapping of the human SUMO proteome reveals co-modification with phosphorylation.</title>
        <authorList>
            <person name="Hendriks I.A."/>
            <person name="Lyon D."/>
            <person name="Young C."/>
            <person name="Jensen L.J."/>
            <person name="Vertegaal A.C."/>
            <person name="Nielsen M.L."/>
        </authorList>
    </citation>
    <scope>SUMOYLATION [LARGE SCALE ANALYSIS] AT LYS-616; LYS-1413; LYS-1740; LYS-1790 AND LYS-1840</scope>
    <scope>IDENTIFICATION BY MASS SPECTROMETRY [LARGE SCALE ANALYSIS]</scope>
</reference>
<reference key="44">
    <citation type="journal article" date="2019" name="Mol. Cell">
        <title>MDC1 interacts with TOPBP1 to maintain chromosomal stability during mitosis.</title>
        <authorList>
            <person name="Leimbacher P.A."/>
            <person name="Jones S.E."/>
            <person name="Shorrocks A.K."/>
            <person name="de Marco Zompit M."/>
            <person name="Day M."/>
            <person name="Blaauwendraad J."/>
            <person name="Bundschuh D."/>
            <person name="Bonham S."/>
            <person name="Fischer R."/>
            <person name="Fink D."/>
            <person name="Kessler B.M."/>
            <person name="Oliver A.W."/>
            <person name="Pearl L.H."/>
            <person name="Blackford A.N."/>
            <person name="Stucki M."/>
        </authorList>
    </citation>
    <scope>FUNCTION</scope>
    <scope>SUBCELLULAR LOCATION</scope>
    <scope>INTERACTION WITH TOPBP1</scope>
    <scope>PHOSPHORYLATION AT SER-168 AND SER-196</scope>
    <scope>MUTAGENESIS OF SER-168 AND SER-196</scope>
</reference>
<reference key="45">
    <citation type="journal article" date="2022" name="Nat. Commun.">
        <title>The CIP2A-TOPBP1 complex safeguards chromosomal stability during mitosis.</title>
        <authorList>
            <person name="De Marco Zompit M."/>
            <person name="Esteban M.T."/>
            <person name="Mooser C."/>
            <person name="Adam S."/>
            <person name="Rossi S.E."/>
            <person name="Jeanrenaud A."/>
            <person name="Leimbacher P.A."/>
            <person name="Fink D."/>
            <person name="Shorrocks A.K."/>
            <person name="Blackford A.N."/>
            <person name="Durocher D."/>
            <person name="Stucki M."/>
        </authorList>
    </citation>
    <scope>SUBCELLULAR LOCATION</scope>
    <scope>PHOSPHORYLATION AT SER-168 AND SER-196</scope>
</reference>
<reference key="46">
    <citation type="journal article" date="2005" name="Cell">
        <title>MDC1 directly binds phosphorylated histone H2AX to regulate cellular responses to DNA double-strand breaks.</title>
        <authorList>
            <person name="Stucki M."/>
            <person name="Clapperton J.A."/>
            <person name="Mohammad D."/>
            <person name="Yaffe M.B."/>
            <person name="Smerdon S.J."/>
            <person name="Jackson S.P."/>
        </authorList>
    </citation>
    <scope>X-RAY CRYSTALLOGRAPHY (2.41 ANGSTROMS) OF 1883-2089 IN COMPLEX WITH PHOSPHORYLATED H2AX</scope>
    <scope>FUNCTION</scope>
</reference>
<reference key="47">
    <citation type="journal article" date="2005" name="J. Biol. Chem.">
        <title>Structure of the BRCT repeat domain of MDC1 and its specificity for the free COOH-terminal end of the gamma-H2AX histone tail.</title>
        <authorList>
            <person name="Lee M.S."/>
            <person name="Edwards R.A."/>
            <person name="Thede G.L."/>
            <person name="Glover J.N.M."/>
        </authorList>
    </citation>
    <scope>X-RAY CRYSTALLOGRAPHY (1.45 ANGSTROMS) OF 1891-2086</scope>
    <scope>INTERACTION WITH PHOSPHORYLATED H2AX</scope>
    <scope>FUNCTION</scope>
</reference>
<reference key="48">
    <citation type="journal article" date="2010" name="Structure">
        <title>Comparison of the structures and peptide binding specificities of the BRCT domains of MDC1 and BRCA1.</title>
        <authorList>
            <person name="Campbell S.J."/>
            <person name="Edwards R.A."/>
            <person name="Glover J.N."/>
        </authorList>
    </citation>
    <scope>X-RAY CRYSTALLOGRAPHY (1.33 ANGSTROMS) OF 1891-2089 IN COMPLEX WITH PHOSPHORYLATED HISTONE TETRAPEPTIDE</scope>
</reference>
<reference key="49">
    <citation type="journal article" date="2012" name="J. Biol. Chem.">
        <title>Molecular basis for the association of microcephalin (MCPH1) protein with the cell division cycle protein 27 (Cdc27) subunit of the anaphase-promoting complex.</title>
        <authorList>
            <person name="Singh N."/>
            <person name="Wiltshire T.D."/>
            <person name="Thompson J.R."/>
            <person name="Mer G."/>
            <person name="Couch F.J."/>
        </authorList>
    </citation>
    <scope>X-RAY CRYSTALLOGRAPHY (1.33 ANGSTROMS) OF 1884-2089</scope>
</reference>
<reference key="50">
    <citation type="journal article" date="2012" name="Nucleic Acids Res.">
        <title>Structural mechanism of the phosphorylation-dependent dimerization of the MDC1 forkhead-associated domain.</title>
        <authorList>
            <person name="Liu J."/>
            <person name="Luo S."/>
            <person name="Zhao H."/>
            <person name="Liao J."/>
            <person name="Li J."/>
            <person name="Yang C."/>
            <person name="Xu B."/>
            <person name="Stern D.F."/>
            <person name="Xu X."/>
            <person name="Ye K."/>
        </authorList>
    </citation>
    <scope>X-RAY CRYSTALLOGRAPHY (1.80 ANGSTROMS) OF 1-10 AND 19-138</scope>
    <scope>PHOSPHORYLATION AT THR-4</scope>
</reference>
<reference evidence="44" key="51">
    <citation type="journal article" date="2013" name="Structure">
        <title>Structural insights into recognition of MDC1 by TopBP1 in DNA replication checkpoint control.</title>
        <authorList>
            <person name="Leung C.C."/>
            <person name="Sun L."/>
            <person name="Gong Z."/>
            <person name="Burkat M."/>
            <person name="Edwards R."/>
            <person name="Assmus M."/>
            <person name="Chen J."/>
            <person name="Glover J.N."/>
        </authorList>
    </citation>
    <scope>X-RAY CRYSTALLOGRAPHY (1.90 ANGSTROMS) OF 325-338 IN COMPLEX WITH TOPBP1</scope>
    <scope>INTERACTION WITH TOPBP1</scope>
    <scope>PHOSPHORYLATION AT SER-329 AND THR-331</scope>
</reference>
<sequence>MEDTQAIDWDVEEEEETEQSSESLRCNVEPVGRLHIFSGAHGPEKDFPLHLGKNVVGRMPDCSVALPFPSISKQHAEIEILAWDKAPILRDCGSLNGTQILRPPKVLSPGVSHRLRDQELILFADLLCQYHRLDVSLPFVSRGPLTVEETPRVQGETQPQRLLLAEDSEEEVDFLSERRMVKKSRTTSSSVIVPESDEEGHSPVLGGLGPPFAFNLNSDTDVEEGQQPATEEASSAARRGATVEAKQSEAEVVTEIQLEKDQPLVKERDNDTKVKRGAGNGVVPAGVILERSQPPGEDSDTDVDDDSRPPGRPAEVHLERAQPFGFIDSDTDAEEERIPATPVVIPMKKRKIFHGVGTRGPGAPGLAHLQESQAGSDTDVEEGKAPQAVPLEKSQASMVINSDTDDEEEVSAALTLAHLKESQPAIWNRDAEEDMPQRVVLLQRSQTTTERDSDTDVEEEELPVENREAVLKDHTKIRALVRAHSEKDQPPFGDSDDSVEADKSSPGIHLERSQASTTVDINTQVEKEVPPGSAIIHIKKHQVSVEGTNQTDVKAVGGPAKLLVVSLEEAWPLHGDCETDAEEGTSLTASVVADVRKSQLPAEGDAGAEWAAAVLKQERAHEVGAQGGPPVAQVEQDLPISRENLTDLVVDTDTLGESTQPQREGAQVPTGREREQHVGGTKDSEDNYGDSEDLDLQATQCFLENQGLEAVQSMEDEPTQAFMLTPPQELGPSHCSFQTTGTLDEPWEVLATQPFCLRESEDSETQPFDTHLEAYGPCLSPPRAIPGDQHPESPVHTEPMGIQGRGRQTVDKVMGIPKETAERVGPERGPLERETEKLLPERQTDVTGEEELTKGKQDREQKQLLARDTQRQESDKNGESASPERDRESLKVEIETSEEIQEKQVQKQTLPSKAFEREVERPVANRECDPAELEEKVPKVILERDTQRGEPEGGSQDQKGQASSPTPEPGVGAGDLPGPTSAPVPSGSQSGGRGSPVSPRRHQKGLLNCKMPPAEKASRIRAAEKVSRGDQESPDACLPPTVPEAPAPPQKPLNSQSQKHLAPPPLLSPLLPSIKPTVRKTRQDGSQEAPEAPLSSELEPFHPKPKIRTRKSSRMTPFPATSAAPEPHPSTSTAQPVTPKPTSQATRSRTNRSSVKTPEPVVPTAPELQPSTSTDQPVTSEPTSQVTRGRKSRSSVKTPETVVPTALELQPSTSTDRPVTSEPTSQATRGRKNRSSVKTPEPVVPTAPELQPSTSTDQPVTSEPTYQATRGRKNRSSVKTPEPVVPTAPELRPSTSTDRPVTPKPTSRTTRSRTNMSSVKTPETVVPTAPELQISTSTDQPVTPKPTSRTTRSRTNMSSVKNPESTVPIAPELPPSTSTEQPVTPEPTSRATRGRKNRSSGKTPETLVPTAPKLEPSTSTDQPVTPEPTSQATRGRTNRSSVKTPETVVPTAPELQPSTSTDQPVTPEPTSQATRGRTDRSSVKTPETVVPTAPELQASASTDQPVTSEPTSRTTRGRKNRSSVKTPETVVPAAPELQPSTSTDQPVTPEPTSRATRGRTNRSSVKTPESIVPIAPELQPSTSRNQLVTPEPTSRATRCRTNRSSVKTPEPVVPTAPEPHPTTSTDQPVTPKLTSRATRRKTNRSSVKTPKPVEPAASDLEPFTPTDQSVTPEAIAQGGQSKTLRSSTVRAMPVPTTPEFQSPVTTDQPISPEPITQPSCIKRQRAAGNPGSLAAPIDHKPCSAPLEPKSQASRNQRWGAVRAAESLTAIPEPASPQLLETPIHASQIQKVEPAGRSRFTPELQPKASQSRKRSLATMDSPPHQKQPQRGEVSQKTVIIKEEEEDTAEKPGKEEDVVTPKPGKRKRDQAEEEPNRIPSRSLRRTKLNQESTAPKVLFTGVVDARGERAVLALGGSLAGSAAEASHLVTDRIRRTVKFLCALGRGIPILSLDWLHQSRKAGFFLPPDEYVVTDPEQEKNFGFSLQDALSRARERRLLEGYEIYVTPGVQPPPPQMGEIISCCGGTYLPSMPRSYKPQRVVITCPQDFPHCSIPLRVGLPLLSPEFLLTGVLKQEAKPEAFVLSPLEMSST</sequence>
<organism>
    <name type="scientific">Homo sapiens</name>
    <name type="common">Human</name>
    <dbReference type="NCBI Taxonomy" id="9606"/>
    <lineage>
        <taxon>Eukaryota</taxon>
        <taxon>Metazoa</taxon>
        <taxon>Chordata</taxon>
        <taxon>Craniata</taxon>
        <taxon>Vertebrata</taxon>
        <taxon>Euteleostomi</taxon>
        <taxon>Mammalia</taxon>
        <taxon>Eutheria</taxon>
        <taxon>Euarchontoglires</taxon>
        <taxon>Primates</taxon>
        <taxon>Haplorrhini</taxon>
        <taxon>Catarrhini</taxon>
        <taxon>Hominidae</taxon>
        <taxon>Homo</taxon>
    </lineage>
</organism>
<evidence type="ECO:0000250" key="1">
    <source>
        <dbReference type="UniProtKB" id="Q5PSV9"/>
    </source>
</evidence>
<evidence type="ECO:0000250" key="2">
    <source>
        <dbReference type="UniProtKB" id="Q5U2M8"/>
    </source>
</evidence>
<evidence type="ECO:0000255" key="3">
    <source>
        <dbReference type="PROSITE-ProRule" id="PRU00033"/>
    </source>
</evidence>
<evidence type="ECO:0000255" key="4">
    <source>
        <dbReference type="PROSITE-ProRule" id="PRU00086"/>
    </source>
</evidence>
<evidence type="ECO:0000256" key="5">
    <source>
        <dbReference type="SAM" id="MobiDB-lite"/>
    </source>
</evidence>
<evidence type="ECO:0000269" key="6">
    <source>
    </source>
</evidence>
<evidence type="ECO:0000269" key="7">
    <source>
    </source>
</evidence>
<evidence type="ECO:0000269" key="8">
    <source>
    </source>
</evidence>
<evidence type="ECO:0000269" key="9">
    <source>
    </source>
</evidence>
<evidence type="ECO:0000269" key="10">
    <source>
    </source>
</evidence>
<evidence type="ECO:0000269" key="11">
    <source>
    </source>
</evidence>
<evidence type="ECO:0000269" key="12">
    <source>
    </source>
</evidence>
<evidence type="ECO:0000269" key="13">
    <source>
    </source>
</evidence>
<evidence type="ECO:0000269" key="14">
    <source>
    </source>
</evidence>
<evidence type="ECO:0000269" key="15">
    <source>
    </source>
</evidence>
<evidence type="ECO:0000269" key="16">
    <source>
    </source>
</evidence>
<evidence type="ECO:0000269" key="17">
    <source>
    </source>
</evidence>
<evidence type="ECO:0000269" key="18">
    <source>
    </source>
</evidence>
<evidence type="ECO:0000269" key="19">
    <source>
    </source>
</evidence>
<evidence type="ECO:0000269" key="20">
    <source>
    </source>
</evidence>
<evidence type="ECO:0000269" key="21">
    <source>
    </source>
</evidence>
<evidence type="ECO:0000269" key="22">
    <source>
    </source>
</evidence>
<evidence type="ECO:0000269" key="23">
    <source>
    </source>
</evidence>
<evidence type="ECO:0000269" key="24">
    <source>
    </source>
</evidence>
<evidence type="ECO:0000269" key="25">
    <source>
    </source>
</evidence>
<evidence type="ECO:0000269" key="26">
    <source>
    </source>
</evidence>
<evidence type="ECO:0000269" key="27">
    <source>
    </source>
</evidence>
<evidence type="ECO:0000269" key="28">
    <source>
    </source>
</evidence>
<evidence type="ECO:0000269" key="29">
    <source>
    </source>
</evidence>
<evidence type="ECO:0000269" key="30">
    <source>
    </source>
</evidence>
<evidence type="ECO:0000269" key="31">
    <source>
    </source>
</evidence>
<evidence type="ECO:0000269" key="32">
    <source>
    </source>
</evidence>
<evidence type="ECO:0000269" key="33">
    <source>
    </source>
</evidence>
<evidence type="ECO:0000269" key="34">
    <source>
    </source>
</evidence>
<evidence type="ECO:0000269" key="35">
    <source>
    </source>
</evidence>
<evidence type="ECO:0000269" key="36">
    <source>
    </source>
</evidence>
<evidence type="ECO:0000269" key="37">
    <source ref="3"/>
</evidence>
<evidence type="ECO:0000269" key="38">
    <source ref="6"/>
</evidence>
<evidence type="ECO:0000303" key="39">
    <source>
    </source>
</evidence>
<evidence type="ECO:0000303" key="40">
    <source>
    </source>
</evidence>
<evidence type="ECO:0000303" key="41">
    <source>
    </source>
</evidence>
<evidence type="ECO:0000305" key="42"/>
<evidence type="ECO:0000312" key="43">
    <source>
        <dbReference type="HGNC" id="HGNC:21163"/>
    </source>
</evidence>
<evidence type="ECO:0007744" key="44">
    <source>
        <dbReference type="PDB" id="3UEO"/>
    </source>
</evidence>
<evidence type="ECO:0007744" key="45">
    <source>
    </source>
</evidence>
<evidence type="ECO:0007744" key="46">
    <source>
    </source>
</evidence>
<evidence type="ECO:0007744" key="47">
    <source>
    </source>
</evidence>
<evidence type="ECO:0007744" key="48">
    <source>
    </source>
</evidence>
<evidence type="ECO:0007744" key="49">
    <source>
    </source>
</evidence>
<evidence type="ECO:0007744" key="50">
    <source>
    </source>
</evidence>
<evidence type="ECO:0007744" key="51">
    <source>
    </source>
</evidence>
<evidence type="ECO:0007744" key="52">
    <source>
    </source>
</evidence>
<evidence type="ECO:0007744" key="53">
    <source>
    </source>
</evidence>
<evidence type="ECO:0007744" key="54">
    <source>
    </source>
</evidence>
<evidence type="ECO:0007744" key="55">
    <source>
    </source>
</evidence>
<evidence type="ECO:0007744" key="56">
    <source>
    </source>
</evidence>
<evidence type="ECO:0007744" key="57">
    <source>
    </source>
</evidence>
<evidence type="ECO:0007744" key="58">
    <source>
    </source>
</evidence>
<evidence type="ECO:0007744" key="59">
    <source>
    </source>
</evidence>
<evidence type="ECO:0007829" key="60">
    <source>
        <dbReference type="PDB" id="2ETX"/>
    </source>
</evidence>
<evidence type="ECO:0007829" key="61">
    <source>
        <dbReference type="PDB" id="3K05"/>
    </source>
</evidence>
<evidence type="ECO:0007829" key="62">
    <source>
        <dbReference type="PDB" id="3UMZ"/>
    </source>
</evidence>
<evidence type="ECO:0007829" key="63">
    <source>
        <dbReference type="PDB" id="3UN0"/>
    </source>
</evidence>
<evidence type="ECO:0007829" key="64">
    <source>
        <dbReference type="PDB" id="3UOT"/>
    </source>
</evidence>
<protein>
    <recommendedName>
        <fullName>Mediator of DNA damage checkpoint protein 1</fullName>
    </recommendedName>
    <alternativeName>
        <fullName>Nuclear factor with BRCT domains 1</fullName>
    </alternativeName>
</protein>